<gene>
    <name evidence="72" type="primary">CUL3</name>
    <name type="synonym">KIAA0617</name>
</gene>
<comment type="function">
    <text evidence="7 9 13 14 15 16 17 18 19 21 22 23 24 25 26 28 29 30 34 36 37 38 40 44 45 47 49 52 53 55 56 59 62 63 65 66 67 68 69">Core component of multiple cullin-RING-based BCR (BTB-CUL3-RBX1) E3 ubiquitin-protein ligase complexes which mediate the ubiquitination and subsequent proteasomal degradation of target proteins. BCR complexes and ARIH1 collaborate in tandem to mediate ubiquitination of target proteins (PubMed:27565346). As a scaffold protein may contribute to catalysis through positioning of the substrate and the ubiquitin-conjugating enzyme. The E3 ubiquitin-protein ligase activity of the complex is dependent on the neddylation of the cullin subunit and is inhibited by the association of the deneddylated cullin subunit with TIP120A/CAND1. The functional specificity of the BCR complex depends on the BTB domain-containing protein as the substrate recognition component. BCR(KLHL42) is involved in ubiquitination of KATNA1. BCR(SPOP) is involved in ubiquitination of BMI1/PCGF4, BRMS1, MACROH2A1 and DAXX, GLI2 and GLI3. Can also form a cullin-RING-based BCR (BTB-CUL3-RBX1) E3 ubiquitin-protein ligase complex containing homodimeric SPOPL or the heterodimer formed by SPOP and SPOPL; these complexes have lower ubiquitin ligase activity. BCR(KLHL9-KLHL13) controls the dynamic behavior of AURKB on mitotic chromosomes and thereby coordinates faithful mitotic progression and completion of cytokinesis. BCR(KLHL12) is involved in ER-Golgi transport by regulating the size of COPII coats, thereby playing a key role in collagen export, which is required for embryonic stem (ES) cells division: BCR(KLHL12) acts by mediating monoubiquitination of SEC31 (SEC31A or SEC31B) (PubMed:22358839, PubMed:27716508). BCR(KLHL3) acts as a regulator of ion transport in the distal nephron; by mediating ubiquitination of WNK4 (PubMed:23387299, PubMed:23453970, PubMed:23576762). The BCR(KLHL20) E3 ubiquitin ligase complex is involved in interferon response and anterograde Golgi to endosome transport: it mediates both ubiquitination leading to degradation and 'Lys-33'-linked ubiquitination (PubMed:20389280, PubMed:21670212, PubMed:21840486, PubMed:24768539). The BCR(KLHL21) E3 ubiquitin ligase complex regulates localization of the chromosomal passenger complex (CPC) from chromosomes to the spindle midzone in anaphase and mediates the ubiquitination of AURKB (PubMed:19995937). The BCR(KLHL22) ubiquitin ligase complex mediates monoubiquitination of PLK1, leading to PLK1 dissociation from phosphoreceptor proteins and subsequent removal from kinetochores, allowing silencing of the spindle assembly checkpoint (SAC) and chromosome segregation (PubMed:23455478). The BCR(KLHL22) ubiquitin ligase complex is also responsible for the amino acid-stimulated 'Lys-48' polyubiquitination and proteasomal degradation of DEPDC5. Through the degradation of DEPDC5, releases the GATOR1 complex-mediated inhibition of the TORC1 pathway (PubMed:29769719). The BCR(KLHL25) ubiquitin ligase complex is involved in translational homeostasis by mediating ubiquitination and subsequent degradation of hypophosphorylated EIF4EBP1 (4E-BP1) (PubMed:22578813). The BCR(KLHL25) ubiquitin ligase complex is also involved in lipid synthesis by mediating ubiquitination and degradation of ACLY (PubMed:27664236). The BCR(KBTBD8) complex acts by mediating monoubiquitination of NOLC1 and TCOF1, leading to remodel the translational program of differentiating cells in favor of neural crest specification (PubMed:26399832). Involved in ubiquitination of cyclin E and of cyclin D1 (in vitro) thus involved in regulation of G1/S transition. Involved in the ubiquitination of KEAP1, ENC1 and KLHL41 (PubMed:15983046). In concert with ATF2 and RBX1, promotes degradation of KAT5 thereby attenuating its ability to acetylate and activate ATM. The BCR(KCTD17) E3 ubiquitin ligase complex mediates ubiquitination and degradation of TCHP, a down-regulator of cilium assembly, thereby inducing ciliogenesis (PubMed:25270598). The BCR(KLHL24) E3 ubiquitin ligase complex mediates ubiquitination of KRT14, controls KRT14 levels during keratinocytes differentiation, and is essential for skin integrity (PubMed:27798626). The BCR(KLHL18) E3 ubiquitin ligase complex mediates the ubiquitination of AURKA leading to its activation at the centrosome which is required for initiating mitotic entry (PubMed:23213400). The BCR(KEAP1) E3 ubiquitin ligase complex acts as a key sensor of oxidative and electrophilic stress by mediating ubiquitination and degradation of NFE2L2/NRF2, a transcription factor regulating expression of many cytoprotective genes (PubMed:15601839, PubMed:16006525). As part of the CUL3(KBTBD6/7) E3 ubiquitin ligase complex functions mediates 'Lys-48' ubiquitination and proteasomal degradation of TIAM1 (PubMed:25684205). By controlling the ubiquitination of that RAC1 guanine exchange factors (GEF), regulates RAC1 signal transduction and downstream biological processes including the organization of the cytoskeleton, cell migration and cell proliferation (PubMed:25684205). The BCR(KBTBD4) E3 ubiquitin ligase complex targets CoREST corepressor complex components RCOR1, KDM1A/LSD1 and HDAC2 for proteasomal degradation with RCOR1 likely to be the primary target while degradation of KDM1A and HDAC2 is likely due to their association with RCOR1 (PubMed:33417871). It also targets RCOR3, MIER2 and MIER3 for proteasomal degradation as well as associated proteins ZNF217 and RREB1 with degradation being dependent on the presence of an ELM2 domain in the target proteins (PubMed:36997086). The BCR(ARMC5) complex mediates premature transcription termination of transcripts that are unfavorably configured for transcriptional elongation by mediating ubiquitination of Pol II subunit POLR2A (PubMed:35687106, PubMed:38225631, PubMed:39504960, PubMed:39667934). Required for 'Lys-63'-linked ubiquitination of large ribosomal subunit protein MRPL12 (PubMed:37526061).</text>
</comment>
<comment type="pathway">
    <text evidence="53 63 67 68 69">Protein modification; protein ubiquitination.</text>
</comment>
<comment type="subunit">
    <text evidence="2 6 7 10 11 12 13 14 15 17 18 19 20 21 22 23 24 25 26 28 29 30 31 32 33 34 35 36 37 38 39 40 41 42 43 44 45 46 47 49 50 51 52 53 54 56 58 60 62 63 64 67 68 69 71">Forms neddylation-dependent homodimers. Component of multiple BCR (BTB-CUL3-RBX1) E3 ubiquitin-protein ligase complexes formed of CUL3, RBX1 and a variable BTB domain-containing protein acting as both, adapter to cullin and substrate recognition subunit. The BCR complex may be active as a heterodimeric complex, in which NEDD8, covalently attached to one CUL3 molecule, binds to the C-terminus of a second CUL3 molecule. Interacts with RBX1, RNF7, CYCE and TIP120A/CAND1 (PubMed:10230407, PubMed:10500095, PubMed:12609982). Part of the BCR(SPOP) containing SPOP, and of BCR containing homodimeric SPOPL or the heterodimer formed by SPOP and SPOPL. Part of the probable BCR(KLHL9-KLHL13) complex with BTB domain proteins KLHL9 and KLHL13. Part of the BCR(KLHL41) complex containing KLHL41. Component of the BCR(KLHL12) E3 ubiquitin ligase complex, at least composed of CUL3 and KLHL12 and RBX1. Component of the BCR(KLHL3) E3 ubiquitin ligase complex, at least composed of CUL3 and KLHL3 and RBX1 (Probable). Part of the BCR(ENC1) complex containing ENC1. Part of a complex consisting of BMI1/PCGF4, CUL3 and SPOP. Part of a complex consisting of BRMS1, CUL3 and SPOP. Component of the BCR(KLHL21) E3 ubiquitin ligase complex, at least composed of CUL3, KLHL21 and RBX1. Component of the BCR(KLHL22) E3 ubiquitin ligase complex, at least composed of CUL3, KLHL22 and RBX1. Component of the BCR(KLHL25) E3 ubiquitin ligase complex, at least composed of CUL3, KLHL25 and RBX1 (PubMed:22578813, PubMed:27664236). Part of a complex consisting of MACROH2A1, CUL3 and SPOP. Component of the BCR(KLHL42) E3 ubiquitin ligase complex, at least composed of CUL3 and KLHL42. Interacts with KLHL42 (via the BTB domain). Interacts with KATNA1; the interaction is enhanced by KLHL42. Component of the BCR(KBTBD8) E3 ubiquitin ligase complex, at least composed of CUL3, KBTBD8 and RBX1 (PubMed:26399832). Interacts with KCTD5, KLHL9, KLHL11, KLHL13, GAN, ZBTB16, KLHL3, KLHL15, KLHL20, KLHL36, GMCL2, BTBD1. Part of a complex that contains CUL3, RBX1 and GAN. Interacts (via BTB domain) with KLHL17; the interaction regulates surface GRIK2 expression. Interacts with KCTD7. Part of the BCR(GAN) complex containing GAN. Part of the BCR(KEAP1) complex containing KEAP1 (PubMed:15601839, PubMed:15983046, PubMed:32341456). Interacts with KLHL10 (By similarity). Interacts with KAT5 and ATF2. Interacts with KCTD17 in the BCR(KCTD17) E3 ubiquitin ligase complex, at least composed of CUL3, KCTD17 and RBX1 (PubMed:25270598). Interacts (when neddylated) with ARIH1; leading to activate the E3 ligase activity of ARIH1 (PubMed:24076655, PubMed:27565346). Interacts with COPS9 isoform 2 (PubMed:23776465). Interacts with PPP2R5B; this interaction is indirect and mediated through KLHL15-binding and leads to PPP2R5B proteasomal degradation (PubMed:23135275). Interacts with RBBP8/CtIP; this interaction is indirect and mediated through KLHL15-binding and leads to RBBP8 proteasomal degradation (PubMed:27561354). Interacts with KLHL24 in the BCR(KLHL24) E3 ubiquitin ligase complex, composed of CUL3, RBX1 and KLHL24 (PubMed:27798626). Interacts with RHOBTB2 (PubMed:15107402, PubMed:29276004). Interacts with AURKA and KLHL18 (via BTB domain) (PubMed:23213400). Interacts (unneddylated form) with DCUN1D1, DCUN1D2, DCUN1D3, DCUN1D4 and DCUN1D5; these interactions promote the cullin neddylation (PubMed:23201271, PubMed:24192928, PubMed:25349211, PubMed:26906416). Component of a BCR3 (BTB-CUL3-RBX1) E3 ubiquitin ligase complex, also named Cul3-RING ubiquitin ligase complex CUL3(KBTBD6/7), composed of CUL3, RBX1, KBTBD6 and KBTBD7 (PubMed:25684205). Component of the BCR(KBTBD2) E3 ubiquitin ligase complex, at least composed of CUL3, KBTBD2 and RBX1. Interacts with KBTBD2 (via the BTB domain) (PubMed:27708159). Component of the BCR(KBTBD4) E3 ubiquitin ligase complex, at least composed of CUL3, KBTBD4 and RBX1 (PubMed:33417871). Component of the BCR(ARMC5) E3 ubiquitin ligase complex, composed of CUL3, ARMC5 and RBX1 (PubMed:35862218, PubMed:35687106, PubMed:38225631, PubMed:39504960, PubMed:39667934).</text>
</comment>
<comment type="interaction">
    <interactant intactId="EBI-456129">
        <id>Q13618</id>
    </interactant>
    <interactant intactId="EBI-7223971">
        <id>Q969K4</id>
        <label>ABTB1</label>
    </interactant>
    <organismsDiffer>false</organismsDiffer>
    <experiments>5</experiments>
</comment>
<comment type="interaction">
    <interactant intactId="EBI-456129">
        <id>Q13618</id>
    </interactant>
    <interactant intactId="EBI-948905">
        <id>O00154</id>
        <label>ACOT7</label>
    </interactant>
    <organismsDiffer>false</organismsDiffer>
    <experiments>2</experiments>
</comment>
<comment type="interaction">
    <interactant intactId="EBI-456129">
        <id>Q13618</id>
    </interactant>
    <interactant intactId="EBI-935503">
        <id>Q9H0C5</id>
        <label>BTBD1</label>
    </interactant>
    <organismsDiffer>false</organismsDiffer>
    <experiments>12</experiments>
</comment>
<comment type="interaction">
    <interactant intactId="EBI-456129">
        <id>Q13618</id>
    </interactant>
    <interactant intactId="EBI-720180">
        <id>Q9BSF8</id>
        <label>BTBD10</label>
    </interactant>
    <organismsDiffer>false</organismsDiffer>
    <experiments>6</experiments>
</comment>
<comment type="interaction">
    <interactant intactId="EBI-456129">
        <id>Q13618</id>
    </interactant>
    <interactant intactId="EBI-710091">
        <id>Q9BX70</id>
        <label>BTBD2</label>
    </interactant>
    <organismsDiffer>false</organismsDiffer>
    <experiments>9</experiments>
</comment>
<comment type="interaction">
    <interactant intactId="EBI-456129">
        <id>Q13618</id>
    </interactant>
    <interactant intactId="EBI-311155">
        <id>Q9Y2F9</id>
        <label>BTBD3</label>
    </interactant>
    <organismsDiffer>false</organismsDiffer>
    <experiments>3</experiments>
</comment>
<comment type="interaction">
    <interactant intactId="EBI-456129">
        <id>Q13618</id>
    </interactant>
    <interactant intactId="EBI-12012762">
        <id>Q96KE9-2</id>
        <label>BTBD6</label>
    </interactant>
    <organismsDiffer>false</organismsDiffer>
    <experiments>3</experiments>
</comment>
<comment type="interaction">
    <interactant intactId="EBI-456129">
        <id>Q13618</id>
    </interactant>
    <interactant intactId="EBI-456077">
        <id>Q86VP6</id>
        <label>CAND1</label>
    </interactant>
    <organismsDiffer>false</organismsDiffer>
    <experiments>8</experiments>
</comment>
<comment type="interaction">
    <interactant intactId="EBI-456129">
        <id>Q13618</id>
    </interactant>
    <interactant intactId="EBI-78060">
        <id>Q14790</id>
        <label>CASP8</label>
    </interactant>
    <organismsDiffer>false</organismsDiffer>
    <experiments>6</experiments>
</comment>
<comment type="interaction">
    <interactant intactId="EBI-456129">
        <id>Q13618</id>
    </interactant>
    <interactant intactId="EBI-3943153">
        <id>O60826</id>
        <label>CCDC22</label>
    </interactant>
    <organismsDiffer>false</organismsDiffer>
    <experiments>2</experiments>
</comment>
<comment type="interaction">
    <interactant intactId="EBI-456129">
        <id>Q13618</id>
    </interactant>
    <interactant intactId="EBI-357706">
        <id>P12277</id>
        <label>CKB</label>
    </interactant>
    <organismsDiffer>false</organismsDiffer>
    <experiments>3</experiments>
</comment>
<comment type="interaction">
    <interactant intactId="EBI-456129">
        <id>Q13618</id>
    </interactant>
    <interactant intactId="EBI-594661">
        <id>Q92905</id>
        <label>COPS5</label>
    </interactant>
    <organismsDiffer>false</organismsDiffer>
    <experiments>13</experiments>
</comment>
<comment type="interaction">
    <interactant intactId="EBI-456129">
        <id>Q13618</id>
    </interactant>
    <interactant intactId="EBI-15794102">
        <id>Q8IWE4</id>
        <label>DCUN1D3</label>
    </interactant>
    <organismsDiffer>false</organismsDiffer>
    <experiments>2</experiments>
</comment>
<comment type="interaction">
    <interactant intactId="EBI-456129">
        <id>Q13618</id>
    </interactant>
    <interactant intactId="EBI-301231">
        <id>Q15369</id>
        <label>ELOC</label>
    </interactant>
    <organismsDiffer>false</organismsDiffer>
    <experiments>3</experiments>
</comment>
<comment type="interaction">
    <interactant intactId="EBI-456129">
        <id>Q13618</id>
    </interactant>
    <interactant intactId="EBI-10172181">
        <id>Q53SE7</id>
        <label>FLJ13057</label>
    </interactant>
    <organismsDiffer>false</organismsDiffer>
    <experiments>3</experiments>
</comment>
<comment type="interaction">
    <interactant intactId="EBI-456129">
        <id>Q13618</id>
    </interactant>
    <interactant intactId="EBI-2548508">
        <id>Q96IK5</id>
        <label>GMCL1</label>
    </interactant>
    <organismsDiffer>false</organismsDiffer>
    <experiments>5</experiments>
</comment>
<comment type="interaction">
    <interactant intactId="EBI-456129">
        <id>Q13618</id>
    </interactant>
    <interactant intactId="EBI-352572">
        <id>P08238</id>
        <label>HSP90AB1</label>
    </interactant>
    <organismsDiffer>false</organismsDiffer>
    <experiments>4</experiments>
</comment>
<comment type="interaction">
    <interactant intactId="EBI-456129">
        <id>Q13618</id>
    </interactant>
    <interactant intactId="EBI-466029">
        <id>P42858</id>
        <label>HTT</label>
    </interactant>
    <organismsDiffer>false</organismsDiffer>
    <experiments>3</experiments>
</comment>
<comment type="interaction">
    <interactant intactId="EBI-456129">
        <id>Q13618</id>
    </interactant>
    <interactant intactId="EBI-715774">
        <id>Q9Y6Y0</id>
        <label>IVNS1ABP</label>
    </interactant>
    <organismsDiffer>false</organismsDiffer>
    <experiments>2</experiments>
</comment>
<comment type="interaction">
    <interactant intactId="EBI-456129">
        <id>Q13618</id>
    </interactant>
    <interactant intactId="EBI-2514778">
        <id>Q86V97</id>
        <label>KBTBD6</label>
    </interactant>
    <organismsDiffer>false</organismsDiffer>
    <experiments>11</experiments>
</comment>
<comment type="interaction">
    <interactant intactId="EBI-456129">
        <id>Q13618</id>
    </interactant>
    <interactant intactId="EBI-473695">
        <id>Q8WVZ9</id>
        <label>KBTBD7</label>
    </interactant>
    <organismsDiffer>false</organismsDiffer>
    <experiments>13</experiments>
</comment>
<comment type="interaction">
    <interactant intactId="EBI-456129">
        <id>Q13618</id>
    </interactant>
    <interactant intactId="EBI-21328977">
        <id>Q8NFY9</id>
        <label>KBTBD8</label>
    </interactant>
    <organismsDiffer>false</organismsDiffer>
    <experiments>4</experiments>
</comment>
<comment type="interaction">
    <interactant intactId="EBI-456129">
        <id>Q13618</id>
    </interactant>
    <interactant intactId="EBI-2505886">
        <id>Q9H3F6</id>
        <label>KCTD10</label>
    </interactant>
    <organismsDiffer>false</organismsDiffer>
    <experiments>8</experiments>
</comment>
<comment type="interaction">
    <interactant intactId="EBI-456129">
        <id>Q13618</id>
    </interactant>
    <interactant intactId="EBI-742916">
        <id>Q8WZ19</id>
        <label>KCTD13</label>
    </interactant>
    <organismsDiffer>false</organismsDiffer>
    <experiments>9</experiments>
</comment>
<comment type="interaction">
    <interactant intactId="EBI-456129">
        <id>Q13618</id>
    </interactant>
    <interactant intactId="EBI-2511344">
        <id>Q8NC69</id>
        <label>KCTD6</label>
    </interactant>
    <organismsDiffer>false</organismsDiffer>
    <experiments>13</experiments>
</comment>
<comment type="interaction">
    <interactant intactId="EBI-456129">
        <id>Q13618</id>
    </interactant>
    <interactant intactId="EBI-11954971">
        <id>Q96MP8-2</id>
        <label>KCTD7</label>
    </interactant>
    <organismsDiffer>false</organismsDiffer>
    <experiments>4</experiments>
</comment>
<comment type="interaction">
    <interactant intactId="EBI-456129">
        <id>Q13618</id>
    </interactant>
    <interactant intactId="EBI-4397613">
        <id>Q7L273</id>
        <label>KCTD9</label>
    </interactant>
    <organismsDiffer>false</organismsDiffer>
    <experiments>11</experiments>
</comment>
<comment type="interaction">
    <interactant intactId="EBI-456129">
        <id>Q13618</id>
    </interactant>
    <interactant intactId="EBI-751001">
        <id>Q14145</id>
        <label>KEAP1</label>
    </interactant>
    <organismsDiffer>false</organismsDiffer>
    <experiments>5</experiments>
</comment>
<comment type="interaction">
    <interactant intactId="EBI-456129">
        <id>Q13618</id>
    </interactant>
    <interactant intactId="EBI-6426228">
        <id>Q9NR64</id>
        <label>KLHL1</label>
    </interactant>
    <organismsDiffer>false</organismsDiffer>
    <experiments>3</experiments>
</comment>
<comment type="interaction">
    <interactant intactId="EBI-456129">
        <id>Q13618</id>
    </interactant>
    <interactant intactId="EBI-740929">
        <id>Q53G59</id>
        <label>KLHL12</label>
    </interactant>
    <organismsDiffer>false</organismsDiffer>
    <experiments>24</experiments>
</comment>
<comment type="interaction">
    <interactant intactId="EBI-456129">
        <id>Q13618</id>
    </interactant>
    <interactant intactId="EBI-1996321">
        <id>Q9P2N7</id>
        <label>KLHL13</label>
    </interactant>
    <organismsDiffer>false</organismsDiffer>
    <experiments>15</experiments>
</comment>
<comment type="interaction">
    <interactant intactId="EBI-456129">
        <id>Q13618</id>
    </interactant>
    <interactant intactId="EBI-746999">
        <id>O95198</id>
        <label>KLHL2</label>
    </interactant>
    <organismsDiffer>false</organismsDiffer>
    <experiments>8</experiments>
</comment>
<comment type="interaction">
    <interactant intactId="EBI-456129">
        <id>Q13618</id>
    </interactant>
    <interactant intactId="EBI-714379">
        <id>Q9Y2M5</id>
        <label>KLHL20</label>
    </interactant>
    <organismsDiffer>false</organismsDiffer>
    <experiments>13</experiments>
</comment>
<comment type="interaction">
    <interactant intactId="EBI-456129">
        <id>Q13618</id>
    </interactant>
    <interactant intactId="EBI-1996072">
        <id>Q53GT1</id>
        <label>KLHL22</label>
    </interactant>
    <organismsDiffer>false</organismsDiffer>
    <experiments>18</experiments>
</comment>
<comment type="interaction">
    <interactant intactId="EBI-456129">
        <id>Q13618</id>
    </interactant>
    <interactant intactId="EBI-10230467">
        <id>Q8N4I8</id>
        <label>KLHL3</label>
    </interactant>
    <organismsDiffer>false</organismsDiffer>
    <experiments>3</experiments>
</comment>
<comment type="interaction">
    <interactant intactId="EBI-456129">
        <id>Q13618</id>
    </interactant>
    <interactant intactId="EBI-8524663">
        <id>Q9UH77</id>
        <label>KLHL3</label>
    </interactant>
    <organismsDiffer>false</organismsDiffer>
    <experiments>9</experiments>
</comment>
<comment type="interaction">
    <interactant intactId="EBI-456129">
        <id>Q13618</id>
    </interactant>
    <interactant intactId="EBI-2692595">
        <id>Q96PQ7</id>
        <label>KLHL5</label>
    </interactant>
    <organismsDiffer>false</organismsDiffer>
    <experiments>8</experiments>
</comment>
<comment type="interaction">
    <interactant intactId="EBI-456129">
        <id>Q13618</id>
    </interactant>
    <interactant intactId="EBI-6153160">
        <id>Q8IXQ5</id>
        <label>KLHL7</label>
    </interactant>
    <organismsDiffer>false</organismsDiffer>
    <experiments>13</experiments>
</comment>
<comment type="interaction">
    <interactant intactId="EBI-456129">
        <id>Q13618</id>
    </interactant>
    <interactant intactId="EBI-949008">
        <id>Q9P2G9</id>
        <label>KLHL8</label>
    </interactant>
    <organismsDiffer>false</organismsDiffer>
    <experiments>8</experiments>
</comment>
<comment type="interaction">
    <interactant intactId="EBI-456129">
        <id>Q13618</id>
    </interactant>
    <interactant intactId="EBI-2510152">
        <id>Q9P2J3</id>
        <label>KLHL9</label>
    </interactant>
    <organismsDiffer>false</organismsDiffer>
    <experiments>12</experiments>
</comment>
<comment type="interaction">
    <interactant intactId="EBI-456129">
        <id>Q13618</id>
    </interactant>
    <interactant intactId="EBI-398523">
        <id>P62877</id>
        <label>RBX1</label>
    </interactant>
    <organismsDiffer>false</organismsDiffer>
    <experiments>7</experiments>
</comment>
<comment type="interaction">
    <interactant intactId="EBI-456129">
        <id>Q13618</id>
    </interactant>
    <interactant intactId="EBI-724292">
        <id>Q8TBC3</id>
        <label>SHKBP1</label>
    </interactant>
    <organismsDiffer>false</organismsDiffer>
    <experiments>7</experiments>
</comment>
<comment type="interaction">
    <interactant intactId="EBI-456129">
        <id>Q13618</id>
    </interactant>
    <interactant intactId="EBI-743549">
        <id>O43791</id>
        <label>SPOP</label>
    </interactant>
    <organismsDiffer>false</organismsDiffer>
    <experiments>8</experiments>
</comment>
<comment type="interaction">
    <interactant intactId="EBI-456129">
        <id>Q13618</id>
    </interactant>
    <interactant intactId="EBI-2505861">
        <id>Q13829</id>
        <label>TNFAIP1</label>
    </interactant>
    <organismsDiffer>false</organismsDiffer>
    <experiments>6</experiments>
</comment>
<comment type="interaction">
    <interactant intactId="EBI-456129">
        <id>Q13618</id>
    </interactant>
    <interactant intactId="EBI-495373">
        <id>P50591</id>
        <label>TNFSF10</label>
    </interactant>
    <organismsDiffer>false</organismsDiffer>
    <experiments>2</experiments>
</comment>
<comment type="interaction">
    <interactant intactId="EBI-456129">
        <id>Q13618</id>
    </interactant>
    <interactant intactId="EBI-1993627">
        <id>O94888</id>
        <label>UBXN7</label>
    </interactant>
    <organismsDiffer>false</organismsDiffer>
    <experiments>6</experiments>
</comment>
<comment type="interaction">
    <interactant intactId="EBI-456129">
        <id>Q13618</id>
    </interactant>
    <interactant intactId="EBI-2548542">
        <id>Q9H898</id>
        <label>ZMAT4</label>
    </interactant>
    <organismsDiffer>false</organismsDiffer>
    <experiments>3</experiments>
</comment>
<comment type="interaction">
    <interactant intactId="EBI-456129">
        <id>Q13618</id>
    </interactant>
    <interactant intactId="EBI-11529334">
        <id>Q9H898-2</id>
        <label>ZMAT4</label>
    </interactant>
    <organismsDiffer>false</organismsDiffer>
    <experiments>3</experiments>
</comment>
<comment type="interaction">
    <interactant intactId="EBI-15794202">
        <id>Q13618-1</id>
    </interactant>
    <interactant intactId="EBI-15794102">
        <id>Q8IWE4</id>
        <label>DCUN1D3</label>
    </interactant>
    <organismsDiffer>false</organismsDiffer>
    <experiments>3</experiments>
</comment>
<comment type="subcellular location">
    <subcellularLocation>
        <location evidence="7 26 34">Nucleus</location>
    </subcellularLocation>
    <subcellularLocation>
        <location evidence="7">Golgi apparatus</location>
    </subcellularLocation>
    <subcellularLocation>
        <location evidence="57">Cell projection</location>
        <location evidence="57">Cilium</location>
        <location evidence="57">Flagellum</location>
    </subcellularLocation>
    <subcellularLocation>
        <location evidence="34">Cytoplasm</location>
        <location evidence="34">Cytoskeleton</location>
        <location evidence="34">Spindle</location>
    </subcellularLocation>
    <subcellularLocation>
        <location>Cytoplasm</location>
    </subcellularLocation>
    <subcellularLocation>
        <location evidence="34">Cytoplasm</location>
        <location evidence="34">Cytoskeleton</location>
        <location evidence="34">Microtubule organizing center</location>
        <location evidence="34">Centrosome</location>
    </subcellularLocation>
    <subcellularLocation>
        <location evidence="34">Cytoplasm</location>
        <location evidence="34">Cytoskeleton</location>
        <location evidence="34">Spindle pole</location>
    </subcellularLocation>
    <text evidence="34 57">Detected along the length of the sperm flagellum and in the cytoplasm of the germ cells (PubMed:28395323). Predominantly found in the nucleus in interphase cells, found at the centrosome at late G2 or prophase, starts accumulating at the spindle poles in prometaphase and stays on the spindle poles and the mitotic spindle at metaphase (PubMed:23213400).</text>
</comment>
<comment type="alternative products">
    <event type="alternative splicing"/>
    <isoform>
        <id>Q13618-1</id>
        <name>1</name>
        <name>Cul-3 Long</name>
        <sequence type="displayed"/>
    </isoform>
    <isoform>
        <id>Q13618-2</id>
        <name>2</name>
        <sequence type="described" ref="VSP_008824"/>
    </isoform>
    <isoform>
        <id>Q13618-3</id>
        <name>3</name>
        <name>Cul-3 Short</name>
        <sequence type="described" ref="VSP_008825"/>
    </isoform>
</comment>
<comment type="tissue specificity">
    <text evidence="57">Brain, spermatozoa, and testis (at protein level). Widely expressed.</text>
</comment>
<comment type="PTM">
    <text evidence="7 8 42 52">Neddylated. Attachment of NEDD8 is required for the E3 ubiquitin-protein ligase activity of the BCR complex. Deneddylated via its interaction with the COP9 signalosome (CSN) complex.</text>
</comment>
<comment type="disease" evidence="27">
    <disease id="DI-03367">
        <name>Pseudohypoaldosteronism 2E</name>
        <acronym>PHA2E</acronym>
        <description>An autosomal dominant disorder characterized by severe hypertension, hyperkalemia, hyperchloremia, hyperchloremic metabolic acidosis, and correction of physiologic abnormalities by thiazide diuretics.</description>
        <dbReference type="MIM" id="614496"/>
    </disease>
    <text>The disease is caused by variants affecting the gene represented in this entry.</text>
</comment>
<comment type="disease" evidence="60 61">
    <disease id="DI-06062">
        <name>Neurodevelopmental disorder with or without autism or seizures</name>
        <acronym>NEDAUS</acronym>
        <description>An autosomal dominant disorder manifesting in infancy and characterized by global developmental delay, variably impaired intellectual development, and speech delay. Some patients have seizures, others have autistic features or behavioral abnormalities. Additional variable features include cardiac defects, failure to thrive, or brain imaging anomalies.</description>
        <dbReference type="MIM" id="619239"/>
    </disease>
    <text>The disease is caused by variants affecting the gene represented in this entry.</text>
</comment>
<comment type="miscellaneous">
    <text evidence="66">High-glucose conditions in renal tubular epithelial cells lead to up-regulation of CUL3 expression, significant increase in CUL3-mediated ubiquitination of MRPL12 and dysregulation of mitochondrial biosynthesis.</text>
</comment>
<comment type="similarity">
    <text evidence="4">Belongs to the cullin family.</text>
</comment>
<comment type="sequence caution" evidence="71">
    <conflict type="frameshift">
        <sequence resource="EMBL-CDS" id="AAC28621"/>
    </conflict>
</comment>
<comment type="sequence caution" evidence="71">
    <conflict type="frameshift">
        <sequence resource="EMBL-CDS" id="AAC36682"/>
    </conflict>
</comment>
<comment type="sequence caution" evidence="71">
    <conflict type="erroneous initiation">
        <sequence resource="EMBL-CDS" id="BAA31592"/>
    </conflict>
    <text>Extended N-terminus.</text>
</comment>
<reference key="1">
    <citation type="journal article" date="1998" name="J. Biol. Chem.">
        <title>Cloning and expression analysis of a novel salicylate suppressible gene, Hs-CUL-3, a member of cullin/Cdc53 family.</title>
        <authorList>
            <person name="Du M."/>
            <person name="Sansores-Garcia L."/>
            <person name="Zu Z."/>
            <person name="Wu K.K."/>
        </authorList>
    </citation>
    <scope>NUCLEOTIDE SEQUENCE [MRNA] (ISOFORM 1)</scope>
</reference>
<reference key="2">
    <citation type="journal article" date="1998" name="DNA Res.">
        <title>Prediction of the coding sequences of unidentified human genes. X. The complete sequences of 100 new cDNA clones from brain which can code for large proteins in vitro.</title>
        <authorList>
            <person name="Ishikawa K."/>
            <person name="Nagase T."/>
            <person name="Suyama M."/>
            <person name="Miyajima N."/>
            <person name="Tanaka A."/>
            <person name="Kotani H."/>
            <person name="Nomura N."/>
            <person name="Ohara O."/>
        </authorList>
    </citation>
    <scope>NUCLEOTIDE SEQUENCE [LARGE SCALE MRNA] (ISOFORM 1)</scope>
    <source>
        <tissue>Brain</tissue>
    </source>
</reference>
<reference key="3">
    <citation type="journal article" date="1998" name="Cell Growth Differ.">
        <title>Human CUL-1, but not other cullin family members, selectively interacts with SKP1 to form a complex with SKP2 and cyclin A.</title>
        <authorList>
            <person name="Michel J.J."/>
            <person name="Xiong Y."/>
        </authorList>
    </citation>
    <scope>NUCLEOTIDE SEQUENCE [MRNA] (ISOFORM 1)</scope>
    <source>
        <tissue>Colon carcinoma</tissue>
    </source>
</reference>
<reference key="4">
    <citation type="submission" date="2003-07" db="EMBL/GenBank/DDBJ databases">
        <title>Cloning and characterization of a new isoform of CUL3 gene in testis.</title>
        <authorList>
            <person name="Xu M."/>
            <person name="Huang X.Y."/>
            <person name="Yin L.L."/>
            <person name="Xu Z.Y."/>
            <person name="Lu L."/>
            <person name="Zhou Z.M."/>
            <person name="Sha J.H."/>
        </authorList>
    </citation>
    <scope>NUCLEOTIDE SEQUENCE [MRNA] (ISOFORM 2)</scope>
    <source>
        <tissue>Testis</tissue>
    </source>
</reference>
<reference key="5">
    <citation type="journal article" date="2004" name="Nat. Genet.">
        <title>Complete sequencing and characterization of 21,243 full-length human cDNAs.</title>
        <authorList>
            <person name="Ota T."/>
            <person name="Suzuki Y."/>
            <person name="Nishikawa T."/>
            <person name="Otsuki T."/>
            <person name="Sugiyama T."/>
            <person name="Irie R."/>
            <person name="Wakamatsu A."/>
            <person name="Hayashi K."/>
            <person name="Sato H."/>
            <person name="Nagai K."/>
            <person name="Kimura K."/>
            <person name="Makita H."/>
            <person name="Sekine M."/>
            <person name="Obayashi M."/>
            <person name="Nishi T."/>
            <person name="Shibahara T."/>
            <person name="Tanaka T."/>
            <person name="Ishii S."/>
            <person name="Yamamoto J."/>
            <person name="Saito K."/>
            <person name="Kawai Y."/>
            <person name="Isono Y."/>
            <person name="Nakamura Y."/>
            <person name="Nagahari K."/>
            <person name="Murakami K."/>
            <person name="Yasuda T."/>
            <person name="Iwayanagi T."/>
            <person name="Wagatsuma M."/>
            <person name="Shiratori A."/>
            <person name="Sudo H."/>
            <person name="Hosoiri T."/>
            <person name="Kaku Y."/>
            <person name="Kodaira H."/>
            <person name="Kondo H."/>
            <person name="Sugawara M."/>
            <person name="Takahashi M."/>
            <person name="Kanda K."/>
            <person name="Yokoi T."/>
            <person name="Furuya T."/>
            <person name="Kikkawa E."/>
            <person name="Omura Y."/>
            <person name="Abe K."/>
            <person name="Kamihara K."/>
            <person name="Katsuta N."/>
            <person name="Sato K."/>
            <person name="Tanikawa M."/>
            <person name="Yamazaki M."/>
            <person name="Ninomiya K."/>
            <person name="Ishibashi T."/>
            <person name="Yamashita H."/>
            <person name="Murakawa K."/>
            <person name="Fujimori K."/>
            <person name="Tanai H."/>
            <person name="Kimata M."/>
            <person name="Watanabe M."/>
            <person name="Hiraoka S."/>
            <person name="Chiba Y."/>
            <person name="Ishida S."/>
            <person name="Ono Y."/>
            <person name="Takiguchi S."/>
            <person name="Watanabe S."/>
            <person name="Yosida M."/>
            <person name="Hotuta T."/>
            <person name="Kusano J."/>
            <person name="Kanehori K."/>
            <person name="Takahashi-Fujii A."/>
            <person name="Hara H."/>
            <person name="Tanase T.-O."/>
            <person name="Nomura Y."/>
            <person name="Togiya S."/>
            <person name="Komai F."/>
            <person name="Hara R."/>
            <person name="Takeuchi K."/>
            <person name="Arita M."/>
            <person name="Imose N."/>
            <person name="Musashino K."/>
            <person name="Yuuki H."/>
            <person name="Oshima A."/>
            <person name="Sasaki N."/>
            <person name="Aotsuka S."/>
            <person name="Yoshikawa Y."/>
            <person name="Matsunawa H."/>
            <person name="Ichihara T."/>
            <person name="Shiohata N."/>
            <person name="Sano S."/>
            <person name="Moriya S."/>
            <person name="Momiyama H."/>
            <person name="Satoh N."/>
            <person name="Takami S."/>
            <person name="Terashima Y."/>
            <person name="Suzuki O."/>
            <person name="Nakagawa S."/>
            <person name="Senoh A."/>
            <person name="Mizoguchi H."/>
            <person name="Goto Y."/>
            <person name="Shimizu F."/>
            <person name="Wakebe H."/>
            <person name="Hishigaki H."/>
            <person name="Watanabe T."/>
            <person name="Sugiyama A."/>
            <person name="Takemoto M."/>
            <person name="Kawakami B."/>
            <person name="Yamazaki M."/>
            <person name="Watanabe K."/>
            <person name="Kumagai A."/>
            <person name="Itakura S."/>
            <person name="Fukuzumi Y."/>
            <person name="Fujimori Y."/>
            <person name="Komiyama M."/>
            <person name="Tashiro H."/>
            <person name="Tanigami A."/>
            <person name="Fujiwara T."/>
            <person name="Ono T."/>
            <person name="Yamada K."/>
            <person name="Fujii Y."/>
            <person name="Ozaki K."/>
            <person name="Hirao M."/>
            <person name="Ohmori Y."/>
            <person name="Kawabata A."/>
            <person name="Hikiji T."/>
            <person name="Kobatake N."/>
            <person name="Inagaki H."/>
            <person name="Ikema Y."/>
            <person name="Okamoto S."/>
            <person name="Okitani R."/>
            <person name="Kawakami T."/>
            <person name="Noguchi S."/>
            <person name="Itoh T."/>
            <person name="Shigeta K."/>
            <person name="Senba T."/>
            <person name="Matsumura K."/>
            <person name="Nakajima Y."/>
            <person name="Mizuno T."/>
            <person name="Morinaga M."/>
            <person name="Sasaki M."/>
            <person name="Togashi T."/>
            <person name="Oyama M."/>
            <person name="Hata H."/>
            <person name="Watanabe M."/>
            <person name="Komatsu T."/>
            <person name="Mizushima-Sugano J."/>
            <person name="Satoh T."/>
            <person name="Shirai Y."/>
            <person name="Takahashi Y."/>
            <person name="Nakagawa K."/>
            <person name="Okumura K."/>
            <person name="Nagase T."/>
            <person name="Nomura N."/>
            <person name="Kikuchi H."/>
            <person name="Masuho Y."/>
            <person name="Yamashita R."/>
            <person name="Nakai K."/>
            <person name="Yada T."/>
            <person name="Nakamura Y."/>
            <person name="Ohara O."/>
            <person name="Isogai T."/>
            <person name="Sugano S."/>
        </authorList>
    </citation>
    <scope>NUCLEOTIDE SEQUENCE [LARGE SCALE MRNA] (ISOFORM 1)</scope>
</reference>
<reference key="6">
    <citation type="journal article" date="2005" name="Nature">
        <title>Generation and annotation of the DNA sequences of human chromosomes 2 and 4.</title>
        <authorList>
            <person name="Hillier L.W."/>
            <person name="Graves T.A."/>
            <person name="Fulton R.S."/>
            <person name="Fulton L.A."/>
            <person name="Pepin K.H."/>
            <person name="Minx P."/>
            <person name="Wagner-McPherson C."/>
            <person name="Layman D."/>
            <person name="Wylie K."/>
            <person name="Sekhon M."/>
            <person name="Becker M.C."/>
            <person name="Fewell G.A."/>
            <person name="Delehaunty K.D."/>
            <person name="Miner T.L."/>
            <person name="Nash W.E."/>
            <person name="Kremitzki C."/>
            <person name="Oddy L."/>
            <person name="Du H."/>
            <person name="Sun H."/>
            <person name="Bradshaw-Cordum H."/>
            <person name="Ali J."/>
            <person name="Carter J."/>
            <person name="Cordes M."/>
            <person name="Harris A."/>
            <person name="Isak A."/>
            <person name="van Brunt A."/>
            <person name="Nguyen C."/>
            <person name="Du F."/>
            <person name="Courtney L."/>
            <person name="Kalicki J."/>
            <person name="Ozersky P."/>
            <person name="Abbott S."/>
            <person name="Armstrong J."/>
            <person name="Belter E.A."/>
            <person name="Caruso L."/>
            <person name="Cedroni M."/>
            <person name="Cotton M."/>
            <person name="Davidson T."/>
            <person name="Desai A."/>
            <person name="Elliott G."/>
            <person name="Erb T."/>
            <person name="Fronick C."/>
            <person name="Gaige T."/>
            <person name="Haakenson W."/>
            <person name="Haglund K."/>
            <person name="Holmes A."/>
            <person name="Harkins R."/>
            <person name="Kim K."/>
            <person name="Kruchowski S.S."/>
            <person name="Strong C.M."/>
            <person name="Grewal N."/>
            <person name="Goyea E."/>
            <person name="Hou S."/>
            <person name="Levy A."/>
            <person name="Martinka S."/>
            <person name="Mead K."/>
            <person name="McLellan M.D."/>
            <person name="Meyer R."/>
            <person name="Randall-Maher J."/>
            <person name="Tomlinson C."/>
            <person name="Dauphin-Kohlberg S."/>
            <person name="Kozlowicz-Reilly A."/>
            <person name="Shah N."/>
            <person name="Swearengen-Shahid S."/>
            <person name="Snider J."/>
            <person name="Strong J.T."/>
            <person name="Thompson J."/>
            <person name="Yoakum M."/>
            <person name="Leonard S."/>
            <person name="Pearman C."/>
            <person name="Trani L."/>
            <person name="Radionenko M."/>
            <person name="Waligorski J.E."/>
            <person name="Wang C."/>
            <person name="Rock S.M."/>
            <person name="Tin-Wollam A.-M."/>
            <person name="Maupin R."/>
            <person name="Latreille P."/>
            <person name="Wendl M.C."/>
            <person name="Yang S.-P."/>
            <person name="Pohl C."/>
            <person name="Wallis J.W."/>
            <person name="Spieth J."/>
            <person name="Bieri T.A."/>
            <person name="Berkowicz N."/>
            <person name="Nelson J.O."/>
            <person name="Osborne J."/>
            <person name="Ding L."/>
            <person name="Meyer R."/>
            <person name="Sabo A."/>
            <person name="Shotland Y."/>
            <person name="Sinha P."/>
            <person name="Wohldmann P.E."/>
            <person name="Cook L.L."/>
            <person name="Hickenbotham M.T."/>
            <person name="Eldred J."/>
            <person name="Williams D."/>
            <person name="Jones T.A."/>
            <person name="She X."/>
            <person name="Ciccarelli F.D."/>
            <person name="Izaurralde E."/>
            <person name="Taylor J."/>
            <person name="Schmutz J."/>
            <person name="Myers R.M."/>
            <person name="Cox D.R."/>
            <person name="Huang X."/>
            <person name="McPherson J.D."/>
            <person name="Mardis E.R."/>
            <person name="Clifton S.W."/>
            <person name="Warren W.C."/>
            <person name="Chinwalla A.T."/>
            <person name="Eddy S.R."/>
            <person name="Marra M.A."/>
            <person name="Ovcharenko I."/>
            <person name="Furey T.S."/>
            <person name="Miller W."/>
            <person name="Eichler E.E."/>
            <person name="Bork P."/>
            <person name="Suyama M."/>
            <person name="Torrents D."/>
            <person name="Waterston R.H."/>
            <person name="Wilson R.K."/>
        </authorList>
    </citation>
    <scope>NUCLEOTIDE SEQUENCE [LARGE SCALE GENOMIC DNA]</scope>
</reference>
<reference key="7">
    <citation type="submission" date="2005-07" db="EMBL/GenBank/DDBJ databases">
        <authorList>
            <person name="Mural R.J."/>
            <person name="Istrail S."/>
            <person name="Sutton G.G."/>
            <person name="Florea L."/>
            <person name="Halpern A.L."/>
            <person name="Mobarry C.M."/>
            <person name="Lippert R."/>
            <person name="Walenz B."/>
            <person name="Shatkay H."/>
            <person name="Dew I."/>
            <person name="Miller J.R."/>
            <person name="Flanigan M.J."/>
            <person name="Edwards N.J."/>
            <person name="Bolanos R."/>
            <person name="Fasulo D."/>
            <person name="Halldorsson B.V."/>
            <person name="Hannenhalli S."/>
            <person name="Turner R."/>
            <person name="Yooseph S."/>
            <person name="Lu F."/>
            <person name="Nusskern D.R."/>
            <person name="Shue B.C."/>
            <person name="Zheng X.H."/>
            <person name="Zhong F."/>
            <person name="Delcher A.L."/>
            <person name="Huson D.H."/>
            <person name="Kravitz S.A."/>
            <person name="Mouchard L."/>
            <person name="Reinert K."/>
            <person name="Remington K.A."/>
            <person name="Clark A.G."/>
            <person name="Waterman M.S."/>
            <person name="Eichler E.E."/>
            <person name="Adams M.D."/>
            <person name="Hunkapiller M.W."/>
            <person name="Myers E.W."/>
            <person name="Venter J.C."/>
        </authorList>
    </citation>
    <scope>NUCLEOTIDE SEQUENCE [LARGE SCALE GENOMIC DNA]</scope>
</reference>
<reference key="8">
    <citation type="journal article" date="2004" name="Genome Res.">
        <title>The status, quality, and expansion of the NIH full-length cDNA project: the Mammalian Gene Collection (MGC).</title>
        <authorList>
            <consortium name="The MGC Project Team"/>
        </authorList>
    </citation>
    <scope>NUCLEOTIDE SEQUENCE [LARGE SCALE MRNA] (ISOFORM 1)</scope>
    <source>
        <tissue>Ovary</tissue>
        <tissue>Skin</tissue>
        <tissue>Uterus</tissue>
    </source>
</reference>
<reference key="9">
    <citation type="journal article" date="1996" name="Cell">
        <title>cul-1 is required for cell cycle exit in C. elegans and identifies a novel gene family.</title>
        <authorList>
            <person name="Kipreos E.T."/>
            <person name="Lander L.E."/>
            <person name="Wing J.P."/>
            <person name="He W.W."/>
            <person name="Hedgecock E.M."/>
        </authorList>
    </citation>
    <scope>NUCLEOTIDE SEQUENCE [MRNA] OF 192-768</scope>
</reference>
<reference key="10">
    <citation type="submission" date="1998-03" db="EMBL/GenBank/DDBJ databases">
        <authorList>
            <person name="Yu W."/>
            <person name="Sarginson J."/>
            <person name="Gibbs R.A."/>
        </authorList>
    </citation>
    <scope>NUCLEOTIDE SEQUENCE [LARGE SCALE MRNA] OF 398-768</scope>
    <source>
        <tissue>Brain</tissue>
    </source>
</reference>
<reference key="11">
    <citation type="journal article" date="1999" name="Genes Dev.">
        <title>Cullin-3 targets cyclin E for ubiquitination and controls S phase in mammalian cells.</title>
        <authorList>
            <person name="Singer J.D."/>
            <person name="Gurian-West M."/>
            <person name="Clurman B."/>
            <person name="Roberts J.M."/>
        </authorList>
    </citation>
    <scope>ALTERNATIVE SPLICING (ISOFORMS 1 AND 3)</scope>
    <scope>FUNCTION</scope>
    <scope>SUBCELLULAR LOCATION</scope>
    <scope>INTERACTION WITH CYCE</scope>
    <scope>NEDDYLATION</scope>
</reference>
<reference key="12">
    <citation type="journal article" date="2001" name="FEBS Lett.">
        <title>In vitro ubiquitination of cyclin D1 by ROC1-CUL1 and ROC1-CUL3.</title>
        <authorList>
            <person name="Maeda I."/>
            <person name="Ohta T."/>
            <person name="Koizumi H."/>
            <person name="Fukuda M."/>
        </authorList>
    </citation>
    <scope>FUNCTION</scope>
</reference>
<reference key="13">
    <citation type="journal article" date="1999" name="Oncogene">
        <title>Covalent modification of all members of human cullin family proteins by NEDD8.</title>
        <authorList>
            <person name="Hori T."/>
            <person name="Osaka F."/>
            <person name="Chiba T."/>
            <person name="Miyamoto C."/>
            <person name="Okabayashi K."/>
            <person name="Shimbara N."/>
            <person name="Kato S."/>
            <person name="Tanaka K."/>
        </authorList>
    </citation>
    <scope>NEDDYLATION</scope>
</reference>
<reference key="14">
    <citation type="journal article" date="1999" name="Mol. Cell">
        <title>ROC1, a homolog of APC11, represents a family of cullin partners with an associated ubiquitin ligase activity.</title>
        <authorList>
            <person name="Ohta T."/>
            <person name="Michel J.J."/>
            <person name="Schottelius A.J."/>
            <person name="Xiong Y."/>
        </authorList>
    </citation>
    <scope>INTERACTION WITH RBX1 AND RNF7</scope>
</reference>
<reference key="15">
    <citation type="journal article" date="2003" name="J. Biol. Chem.">
        <title>TIP120A associates with cullins and modulates ubiquitin ligase activity.</title>
        <authorList>
            <person name="Min K.-W."/>
            <person name="Hwang J.-W."/>
            <person name="Lee J.-S."/>
            <person name="Park Y."/>
            <person name="Tamura T.-A."/>
            <person name="Yoon J.-B."/>
        </authorList>
    </citation>
    <scope>INTERACTION WITH TIP120A</scope>
</reference>
<reference key="16">
    <citation type="journal article" date="2003" name="Nat. Cell Biol.">
        <title>Targeting of protein ubiquitination by BTB-Cullin 3-Roc1 ubiquitin ligases.</title>
        <authorList>
            <person name="Furukawa M."/>
            <person name="He Y.J."/>
            <person name="Borchers C."/>
            <person name="Xiong Y."/>
        </authorList>
    </citation>
    <scope>INTERACTION WITH GAN; ZBTB16; KLHL9; KLHL13; KLHL21; KLHL3; KLHL15; KLHL20; KLHL36; GMCL2; BTBD1 AND SPOP</scope>
</reference>
<reference key="17">
    <citation type="journal article" date="2004" name="Genes Dev.">
        <title>RhoBTB2 is a substrate of the mammalian Cul3 ubiquitin ligase complex.</title>
        <authorList>
            <person name="Wilkins A."/>
            <person name="Ping Q."/>
            <person name="Carpenter C.L."/>
        </authorList>
    </citation>
    <scope>INTERACTION WITH RHOBTB2</scope>
</reference>
<reference key="18">
    <citation type="journal article" date="2005" name="J. Biol. Chem.">
        <title>Ubiquitination of Keap1, a BTB-Kelch substrate adaptor protein for Cul3, targets Keap1 for degradation by a proteasome-independent pathway.</title>
        <authorList>
            <person name="Zhang D.D."/>
            <person name="Lo S.C."/>
            <person name="Sun Z."/>
            <person name="Habib G.M."/>
            <person name="Lieberman M.W."/>
            <person name="Hannink M."/>
        </authorList>
    </citation>
    <scope>FUNCTION</scope>
    <scope>IDENTIFICATION IN THE BCR(KLHL41) COMPLEX</scope>
    <scope>IDENTIFICATION IN THE BCR(ENC1) COMPLEX</scope>
    <scope>IDENTIFICATION IN THE BCR(KEAP1) COMPLEX</scope>
    <scope>IDENTIFICATION IN THE BCR(GAN) COMPLEX</scope>
</reference>
<reference key="19">
    <citation type="journal article" date="2005" name="Proc. Natl. Acad. Sci. U.S.A.">
        <title>Stable X chromosome inactivation involves the PRC1 Polycomb complex and requires histone MACROH2A1 and the CULLIN3/SPOP ubiquitin E3 ligase.</title>
        <authorList>
            <person name="Hernandez-Munoz I."/>
            <person name="Lund A.H."/>
            <person name="van der Stoop P."/>
            <person name="Boutsma E."/>
            <person name="Muijrers I."/>
            <person name="Verhoeven E."/>
            <person name="Nusinow D.A."/>
            <person name="Panning B."/>
            <person name="Marahrens Y."/>
            <person name="van Lohuizen M."/>
        </authorList>
    </citation>
    <scope>IDENTIFICATION IN A COMPLEX WITH SPOP AND BMI1</scope>
    <scope>IDENTIFICATION IN A COMPLEX WITH SPOP AND MACROH2A1</scope>
    <scope>FUNCTION</scope>
</reference>
<reference key="20">
    <citation type="journal article" date="2006" name="J. Biol. Chem.">
        <title>BTB domain-containing speckle-type POZ protein (SPOP) serves as an adaptor of Daxx for ubiquitination by Cul3-based ubiquitin ligase.</title>
        <authorList>
            <person name="Kwon J.E."/>
            <person name="La M."/>
            <person name="Oh K.H."/>
            <person name="Oh Y.M."/>
            <person name="Kim G.R."/>
            <person name="Seol J.H."/>
            <person name="Baek S.H."/>
            <person name="Chiba T."/>
            <person name="Tanaka K."/>
            <person name="Bang O.S."/>
            <person name="Joe C.O."/>
            <person name="Chung C.H."/>
        </authorList>
    </citation>
    <scope>IDENTIFICATION IN THE BCR(SPOP) COMPLEX</scope>
    <scope>INTERACTION WITH SPOP</scope>
    <scope>FUNCTION IN UBIQUITINATION OF DAXX</scope>
</reference>
<reference key="21">
    <citation type="journal article" date="2005" name="Mol. Cell. Biol.">
        <title>BTB protein Keap1 targets antioxidant transcription factor Nrf2 for ubiquitination by the Cullin 3-Roc1 ligase.</title>
        <authorList>
            <person name="Furukawa M."/>
            <person name="Xiong Y."/>
        </authorList>
    </citation>
    <scope>FUNCTION OF THE BCR(KEAP1) COMPLEX</scope>
    <scope>IDENTIFICATION IN THE BCR(KEAP1) COMPLEX</scope>
</reference>
<reference key="22">
    <citation type="journal article" date="2007" name="Dev. Cell">
        <title>A Cul3-based E3 ligase removes Aurora B from mitotic chromosomes, regulating mitotic progression and completion of cytokinesis in human cells.</title>
        <authorList>
            <person name="Sumara I."/>
            <person name="Quadroni M."/>
            <person name="Frei C."/>
            <person name="Olma M.H."/>
            <person name="Sumara G."/>
            <person name="Ricci R."/>
            <person name="Peter M."/>
        </authorList>
    </citation>
    <scope>FUNCTION</scope>
    <scope>INTERACTION WITH KLHL9 AND KLHL13</scope>
</reference>
<reference key="23">
    <citation type="journal article" date="2007" name="Cell. Signal.">
        <title>Characterization of cullin-based E3 ubiquitin ligases in intact mammalian cells -- evidence for cullin dimerization.</title>
        <authorList>
            <person name="Chew E.H."/>
            <person name="Poobalasingam T."/>
            <person name="Hawkey C.J."/>
            <person name="Hagen T."/>
        </authorList>
    </citation>
    <scope>SELF-ASSOCIATION</scope>
</reference>
<reference key="24">
    <citation type="journal article" date="2007" name="Mol. Biol. Cell">
        <title>The Cullin3 ubiquitin ligase functions as a Nedd8-bound heterodimer.</title>
        <authorList>
            <person name="Wimuttisuk W."/>
            <person name="Singer J.D."/>
        </authorList>
    </citation>
    <scope>BCR COMPLEX HOMODIMERIZATION</scope>
</reference>
<reference key="25">
    <citation type="journal article" date="2008" name="FEBS J.">
        <title>KCTD5, a putative substrate adaptor for cullin3 ubiquitin ligases.</title>
        <authorList>
            <person name="Bayon Y."/>
            <person name="Trinidad A.G."/>
            <person name="de la Puerta M.L."/>
            <person name="Del Carmen Rodriguez M."/>
            <person name="Bogetz J."/>
            <person name="Rojas A."/>
            <person name="De Pereda J.M."/>
            <person name="Rahmouni S."/>
            <person name="Williams S."/>
            <person name="Matsuzawa S."/>
            <person name="Reed J.C."/>
            <person name="Crespo M.S."/>
            <person name="Mustelin T."/>
            <person name="Alonso A."/>
        </authorList>
    </citation>
    <scope>INTERACTION WITH KCTD5</scope>
</reference>
<reference key="26">
    <citation type="journal article" date="2008" name="J. Biol. Chem.">
        <title>Regulation of TIP60 by ATF2 modulates ATM activation.</title>
        <authorList>
            <person name="Bhoumik A."/>
            <person name="Singha N."/>
            <person name="O'Connell M.J."/>
            <person name="Ronai Z.A."/>
        </authorList>
    </citation>
    <scope>FUNCTION</scope>
    <scope>INTERACTION WITH ATF2 AND KAT5</scope>
</reference>
<reference key="27">
    <citation type="journal article" date="2005" name="Proc. Natl. Acad. Sci. U.S.A.">
        <title>Modifying specific cysteines of the electrophile-sensing human Keap1 protein is insufficient to disrupt binding to the Nrf2 domain Neh2.</title>
        <authorList>
            <person name="Eggler A.L."/>
            <person name="Liu G."/>
            <person name="Pezzuto J.M."/>
            <person name="van Breemen R.B."/>
            <person name="Mesecar A.D."/>
        </authorList>
    </citation>
    <scope>FUNCTION OF THE BCR(KEAP1) COMPLEX</scope>
</reference>
<reference key="28">
    <citation type="journal article" date="2009" name="J. Biol. Chem.">
        <title>The Cul3/Klhdc5 E3 ligase regulates p60/katanin and is required for normal mitosis in mammalian cells.</title>
        <authorList>
            <person name="Cummings C.M."/>
            <person name="Bentley C.A."/>
            <person name="Perdue S.A."/>
            <person name="Baas P.W."/>
            <person name="Singer J.D."/>
        </authorList>
    </citation>
    <scope>IDENTIFICATION IN THE BCR(KLHL42) COMPLEX</scope>
    <scope>FUNCTION IN UBIQUITINATION OF KATNA1</scope>
    <scope>INTERACTION WITH KATNA1 AND KLHL42</scope>
</reference>
<reference key="29">
    <citation type="journal article" date="2009" name="J. Cell Biol.">
        <title>The Cul3-KLHL21 E3 ubiquitin ligase targets aurora B to midzone microtubules in anaphase and is required for cytokinesis.</title>
        <authorList>
            <person name="Maerki S."/>
            <person name="Olma M.H."/>
            <person name="Staubli T."/>
            <person name="Steigemann P."/>
            <person name="Gerlich D.W."/>
            <person name="Quadroni M."/>
            <person name="Sumara I."/>
            <person name="Peter M."/>
        </authorList>
    </citation>
    <scope>IDENTIFICATION IN THE BCR(KLHL21) COMPLEX</scope>
    <scope>FUNCTION</scope>
</reference>
<reference key="30">
    <citation type="journal article" date="2010" name="EMBO J.">
        <title>The Cullin 3 substrate adaptor KLHL20 mediates DAPK ubiquitination to control interferon responses.</title>
        <authorList>
            <person name="Lee Y.R."/>
            <person name="Yuan W.C."/>
            <person name="Ho H.C."/>
            <person name="Chen C.H."/>
            <person name="Shih H.M."/>
            <person name="Chen R.H."/>
        </authorList>
    </citation>
    <scope>FUNCTION</scope>
    <scope>IDENTIFICATION IN A BCR (BTB-CUL3-RBX1) E3 UBIQUITIN LIGASE COMPLEX</scope>
</reference>
<reference key="31">
    <citation type="journal article" date="2011" name="BMC Syst. Biol.">
        <title>Initial characterization of the human central proteome.</title>
        <authorList>
            <person name="Burkard T.R."/>
            <person name="Planyavsky M."/>
            <person name="Kaupe I."/>
            <person name="Breitwieser F.P."/>
            <person name="Buerckstuemmer T."/>
            <person name="Bennett K.L."/>
            <person name="Superti-Furga G."/>
            <person name="Colinge J."/>
        </authorList>
    </citation>
    <scope>IDENTIFICATION BY MASS SPECTROMETRY [LARGE SCALE ANALYSIS]</scope>
</reference>
<reference key="32">
    <citation type="journal article" date="2011" name="Biochem. Biophys. Res. Commun.">
        <title>Breast cancer metastasis suppressor 1 (BRMS1) is destabilized by the Cul3-SPOP E3 ubiquitin ligase complex.</title>
        <authorList>
            <person name="Kim B."/>
            <person name="Nam H.J."/>
            <person name="Pyo K.E."/>
            <person name="Jang M.J."/>
            <person name="Kim I.S."/>
            <person name="Kim D."/>
            <person name="Boo K."/>
            <person name="Lee S.H."/>
            <person name="Yoon J.B."/>
            <person name="Baek S.H."/>
            <person name="Kim J.H."/>
        </authorList>
    </citation>
    <scope>FUNCTION</scope>
    <scope>SUBCELLULAR LOCATION</scope>
    <scope>IDENTIFICATION IN A COMPLEX WITH SPOP AND BRMS1</scope>
</reference>
<reference key="33">
    <citation type="journal article" date="2011" name="Cancer Cell">
        <title>A Cullin3-KLHL20 Ubiquitin ligase-dependent pathway targets PML to potentiate HIF-1 signaling and prostate cancer progression.</title>
        <authorList>
            <person name="Yuan W.C."/>
            <person name="Lee Y.R."/>
            <person name="Huang S.F."/>
            <person name="Lin Y.M."/>
            <person name="Chen T.Y."/>
            <person name="Chung H.C."/>
            <person name="Tsai C.H."/>
            <person name="Chen H.Y."/>
            <person name="Chiang C.T."/>
            <person name="Lai C.K."/>
            <person name="Lu L.T."/>
            <person name="Chen C.H."/>
            <person name="Gu D.L."/>
            <person name="Pu Y.S."/>
            <person name="Jou Y.S."/>
            <person name="Lu K.P."/>
            <person name="Hsiao P.W."/>
            <person name="Shih H.M."/>
            <person name="Chen R.H."/>
        </authorList>
    </citation>
    <scope>FUNCTION</scope>
    <scope>IDENTIFICATION IN A BCR (BTB-CUL3-RBX1) E3 UBIQUITIN LIGASE COMPLEX</scope>
</reference>
<reference key="34">
    <citation type="journal article" date="2011" name="J. Cell Biol.">
        <title>PDZ-RhoGEF ubiquitination by Cullin3-KLHL20 controls neurotrophin-induced neurite outgrowth.</title>
        <authorList>
            <person name="Lin M.Y."/>
            <person name="Lin Y.M."/>
            <person name="Kao T.C."/>
            <person name="Chuang H.H."/>
            <person name="Chen R.H."/>
        </authorList>
    </citation>
    <scope>FUNCTION</scope>
    <scope>IDENTIFICATION IN A BCR (BTB-CUL3-RBX1) E3 UBIQUITIN LIGASE COMPLEX</scope>
</reference>
<reference key="35">
    <citation type="journal article" date="2012" name="Am. J. Hum. Genet.">
        <title>A homozygous mutation in KCTD7 links neuronal ceroid lipofuscinosis to the ubiquitin-proteasome system.</title>
        <authorList>
            <person name="Staropoli J.F."/>
            <person name="Karaa A."/>
            <person name="Lim E.T."/>
            <person name="Kirby A."/>
            <person name="Elbalalesy N."/>
            <person name="Romansky S.G."/>
            <person name="Leydiker K.B."/>
            <person name="Coppel S.H."/>
            <person name="Barone R."/>
            <person name="Xin W."/>
            <person name="MacDonald M.E."/>
            <person name="Abdenur J.E."/>
            <person name="Daly M.J."/>
            <person name="Sims K.B."/>
            <person name="Cotman S.L."/>
        </authorList>
    </citation>
    <scope>INTERACTION WITH KCTD7</scope>
</reference>
<reference key="36">
    <citation type="journal article" date="2012" name="Biol. Open">
        <title>The CUL3-KLHL18 ligase regulates mitotic entry and ubiquitylates Aurora-A.</title>
        <authorList>
            <person name="Moghe S."/>
            <person name="Jiang F."/>
            <person name="Miura Y."/>
            <person name="Cerny R.L."/>
            <person name="Tsai M.Y."/>
            <person name="Furukawa M."/>
        </authorList>
    </citation>
    <scope>FUNCTION</scope>
    <scope>INTERACTION WITH AURKA AND KLHL18</scope>
    <scope>SUBCELLULAR LOCATION</scope>
</reference>
<reference key="37">
    <citation type="journal article" date="2012" name="J. Biol. Chem.">
        <title>Selective proteasomal degradation of the B'beta subunit of protein phosphatase 2A by the E3 ubiquitin ligase adaptor Kelch-like 15.</title>
        <authorList>
            <person name="Oberg E.A."/>
            <person name="Nifoussi S.K."/>
            <person name="Gingras A.C."/>
            <person name="Strack S."/>
        </authorList>
    </citation>
    <scope>INTERACTION WITH PPP2R5B</scope>
</reference>
<reference key="38">
    <citation type="journal article" date="2012" name="Mol. Cell">
        <title>Translational homeostasis via the mRNA cap-binding protein, eIF4E.</title>
        <authorList>
            <person name="Yanagiya A."/>
            <person name="Suyama E."/>
            <person name="Adachi H."/>
            <person name="Svitkin Y.V."/>
            <person name="Aza-Blanc P."/>
            <person name="Imataka H."/>
            <person name="Mikami S."/>
            <person name="Martineau Y."/>
            <person name="Ronai Z.A."/>
            <person name="Sonenberg N."/>
        </authorList>
    </citation>
    <scope>IDENTIFICATION IN THE BCR(KLHL25) COMPLEX</scope>
    <scope>FUNCTION</scope>
</reference>
<reference key="39">
    <citation type="journal article" date="2012" name="Nature">
        <title>Ubiquitin-dependent regulation of COPII coat size and function.</title>
        <authorList>
            <person name="Jin L."/>
            <person name="Pahuja K.B."/>
            <person name="Wickliffe K.E."/>
            <person name="Gorur A."/>
            <person name="Baumgartel C."/>
            <person name="Schekman R."/>
            <person name="Rape M."/>
        </authorList>
    </citation>
    <scope>IDENTIFICATION IN THE BCR(KLHL12) COMPLEX</scope>
    <scope>FUNCTION</scope>
</reference>
<reference key="40">
    <citation type="journal article" date="2012" name="Proc. Natl. Acad. Sci. U.S.A.">
        <title>N-terminal acetylome analyses and functional insights of the N-terminal acetyltransferase NatB.</title>
        <authorList>
            <person name="Van Damme P."/>
            <person name="Lasa M."/>
            <person name="Polevoda B."/>
            <person name="Gazquez C."/>
            <person name="Elosegui-Artola A."/>
            <person name="Kim D.S."/>
            <person name="De Juan-Pardo E."/>
            <person name="Demeyer K."/>
            <person name="Hole K."/>
            <person name="Larrea E."/>
            <person name="Timmerman E."/>
            <person name="Prieto J."/>
            <person name="Arnesen T."/>
            <person name="Sherman F."/>
            <person name="Gevaert K."/>
            <person name="Aldabe R."/>
        </authorList>
    </citation>
    <scope>ACETYLATION [LARGE SCALE ANALYSIS] AT SER-2</scope>
    <scope>CLEAVAGE OF INITIATOR METHIONINE [LARGE SCALE ANALYSIS]</scope>
    <scope>IDENTIFICATION BY MASS SPECTROMETRY [LARGE SCALE ANALYSIS]</scope>
</reference>
<reference key="41">
    <citation type="journal article" date="2013" name="Biochem. J.">
        <title>The CUL3-KLHL3 E3 ligase complex mutated in Gordon's hypertension syndrome interacts with and ubiquitylates WNK isoforms: disease-causing mutations in KLHL3 and WNK4 disrupt interaction.</title>
        <authorList>
            <person name="Ohta A."/>
            <person name="Schumacher F.R."/>
            <person name="Mehellou Y."/>
            <person name="Johnson C."/>
            <person name="Knebel A."/>
            <person name="Macartney T.J."/>
            <person name="Wood N.T."/>
            <person name="Alessi D.R."/>
            <person name="Kurz T."/>
        </authorList>
    </citation>
    <scope>FUNCTION</scope>
    <scope>INTERACTION WITH KLHL3</scope>
</reference>
<reference key="42">
    <citation type="journal article" date="2013" name="Cell Rep.">
        <title>Impaired KLHL3-mediated ubiquitination of WNK4 causes human hypertension.</title>
        <authorList>
            <person name="Wakabayashi M."/>
            <person name="Mori T."/>
            <person name="Isobe K."/>
            <person name="Sohara E."/>
            <person name="Susa K."/>
            <person name="Araki Y."/>
            <person name="Chiga M."/>
            <person name="Kikuchi E."/>
            <person name="Nomura N."/>
            <person name="Mori Y."/>
            <person name="Matsuo H."/>
            <person name="Murata T."/>
            <person name="Nomura S."/>
            <person name="Asano T."/>
            <person name="Kawaguchi H."/>
            <person name="Nonoyama S."/>
            <person name="Rai T."/>
            <person name="Sasaki S."/>
            <person name="Uchida S."/>
        </authorList>
    </citation>
    <scope>FUNCTION</scope>
    <scope>IDENTIFICATION IN THE BCR(KLHL3) COMPLEX</scope>
</reference>
<reference key="43">
    <citation type="journal article" date="2013" name="EMBO J.">
        <title>TRIAD1 and HHARI bind to and are activated by distinct neddylated Cullin-RING ligase complexes.</title>
        <authorList>
            <person name="Kelsall I.R."/>
            <person name="Duda D.M."/>
            <person name="Olszewski J.L."/>
            <person name="Hofmann K."/>
            <person name="Knebel A."/>
            <person name="Langevin F."/>
            <person name="Wood N."/>
            <person name="Wightman M."/>
            <person name="Schulman B.A."/>
            <person name="Alpi A.F."/>
        </authorList>
    </citation>
    <scope>INTERACTION WITH ARIH1</scope>
    <scope>NEDDYLATION</scope>
</reference>
<reference key="44">
    <citation type="journal article" date="2013" name="J. Proteome Res.">
        <title>Toward a comprehensive characterization of a human cancer cell phosphoproteome.</title>
        <authorList>
            <person name="Zhou H."/>
            <person name="Di Palma S."/>
            <person name="Preisinger C."/>
            <person name="Peng M."/>
            <person name="Polat A.N."/>
            <person name="Heck A.J."/>
            <person name="Mohammed S."/>
        </authorList>
    </citation>
    <scope>PHOSPHORYLATION [LARGE SCALE ANALYSIS] AT SER-585</scope>
    <scope>IDENTIFICATION BY MASS SPECTROMETRY [LARGE SCALE ANALYSIS]</scope>
    <source>
        <tissue>Erythroleukemia</tissue>
    </source>
</reference>
<reference key="45">
    <citation type="journal article" date="2013" name="Nat. Cell Biol.">
        <title>Ubiquitylation-dependent localization of PLK1 in mitosis.</title>
        <authorList>
            <person name="Beck J."/>
            <person name="Maerki S."/>
            <person name="Posch M."/>
            <person name="Metzger T."/>
            <person name="Persaud A."/>
            <person name="Scheel H."/>
            <person name="Hofmann K."/>
            <person name="Rotin D."/>
            <person name="Pedrioli P."/>
            <person name="Swedlow J.R."/>
            <person name="Peter M."/>
            <person name="Sumara I."/>
        </authorList>
    </citation>
    <scope>IDENTIFICATION IN THE BCR(KLHL22) COMPLEX</scope>
    <scope>FUNCTION</scope>
</reference>
<reference key="46">
    <citation type="journal article" date="2013" name="PLoS ONE">
        <title>Myeloma overexpressed 2 (Myeov2) regulates L11 subnuclear localization through Nedd8 modification.</title>
        <authorList>
            <person name="Ebina M."/>
            <person name="Tsuruta F."/>
            <person name="Katoh M.C."/>
            <person name="Kigoshi Y."/>
            <person name="Someya A."/>
            <person name="Chiba T."/>
        </authorList>
    </citation>
    <scope>INTERACTION WITH COPS9</scope>
</reference>
<reference key="47">
    <citation type="journal article" date="2013" name="Proc. Natl. Acad. Sci. U.S.A.">
        <title>Kelch-like 3 and Cullin 3 regulate electrolyte homeostasis via ubiquitination and degradation of WNK4.</title>
        <authorList>
            <person name="Shibata S."/>
            <person name="Zhang J."/>
            <person name="Puthumana J."/>
            <person name="Stone K.L."/>
            <person name="Lifton R.P."/>
        </authorList>
    </citation>
    <scope>FUNCTION</scope>
    <scope>IDENTIFICATION IN THE BCR(KLHL3) COMPLEX</scope>
</reference>
<reference key="48">
    <citation type="journal article" date="2013" name="Structure">
        <title>Structural conservation of distinctive N-terminal acetylation-dependent interactions across a family of mammalian NEDD8 ligation enzymes.</title>
        <authorList>
            <person name="Monda J.K."/>
            <person name="Scott D.C."/>
            <person name="Miller D.J."/>
            <person name="Lydeard J."/>
            <person name="King D."/>
            <person name="Harper J.W."/>
            <person name="Bennett E.J."/>
            <person name="Schulman B.A."/>
        </authorList>
    </citation>
    <scope>INTERACTION WITH DCUN1D1; DCUN1D2; DCUN1D3; DCUN1D4 AND DCUN1D5</scope>
</reference>
<reference key="49">
    <citation type="journal article" date="2014" name="Clin. Cancer Res.">
        <title>Oncogenic function of SCCRO5/DCUN1D5 requires its Neddylation E3 activity and nuclear localization.</title>
        <authorList>
            <person name="Bommelje C.C."/>
            <person name="Weeda V.B."/>
            <person name="Huang G."/>
            <person name="Shah K."/>
            <person name="Bains S."/>
            <person name="Buss E."/>
            <person name="Shaha M."/>
            <person name="Goenen M."/>
            <person name="Ghossein R."/>
            <person name="Ramanathan S.Y."/>
            <person name="Singh B."/>
        </authorList>
    </citation>
    <scope>INTERACTION WITH DCUN1D5</scope>
</reference>
<reference key="50">
    <citation type="journal article" date="2014" name="J. Biol. Chem.">
        <title>SCCRO3 (DCUN1D3) antagonizes the neddylation and oncogenic activity of SCCRO (DCUN1D1).</title>
        <authorList>
            <person name="Huang G."/>
            <person name="Stock C."/>
            <person name="Bommelje C.C."/>
            <person name="Weeda V.B."/>
            <person name="Shah K."/>
            <person name="Bains S."/>
            <person name="Buss E."/>
            <person name="Shaha M."/>
            <person name="Rechler W."/>
            <person name="Ramanathan S.Y."/>
            <person name="Singh B."/>
        </authorList>
    </citation>
    <scope>INTERACTION WITH DCUN1D3</scope>
</reference>
<reference key="51">
    <citation type="journal article" date="2014" name="Mol. Cell">
        <title>K33-linked polyubiquitination of coronin 7 by Cul3-KLHL20 ubiquitin E3 ligase regulates protein trafficking.</title>
        <authorList>
            <person name="Yuan W.C."/>
            <person name="Lee Y.R."/>
            <person name="Lin S.Y."/>
            <person name="Chang L.Y."/>
            <person name="Tan Y.P."/>
            <person name="Hung C.C."/>
            <person name="Kuo J.C."/>
            <person name="Liu C.H."/>
            <person name="Lin M.Y."/>
            <person name="Xu M."/>
            <person name="Chen Z.J."/>
            <person name="Chen R.H."/>
        </authorList>
    </citation>
    <scope>FUNCTION</scope>
    <scope>IDENTIFICATION IN A BCR (BTB-CUL3-RBX1) E3 UBIQUITIN LIGASE COMPLEX</scope>
</reference>
<reference key="52">
    <citation type="journal article" date="2014" name="Nat. Commun.">
        <title>Ubiquitin-proteasome system controls ciliogenesis at the initial step of axoneme extension.</title>
        <authorList>
            <person name="Kasahara K."/>
            <person name="Kawakami Y."/>
            <person name="Kiyono T."/>
            <person name="Yonemura S."/>
            <person name="Kawamura Y."/>
            <person name="Era S."/>
            <person name="Matsuzaki F."/>
            <person name="Goshima N."/>
            <person name="Inagaki M."/>
        </authorList>
    </citation>
    <scope>INTERACTION WITH KCTD17</scope>
    <scope>IDENTIFICATION IN THE BCR(KCTD17) E3 UBIQUITIN LIGASE COMPLEX</scope>
    <scope>FUNCTION</scope>
</reference>
<reference key="53">
    <citation type="journal article" date="2015" name="Mol. Cell">
        <title>CUL3-KBTBD6/KBTBD7 ubiquitin ligase cooperates with GABARAP proteins to spatially restrict TIAM1-RAC1 signaling.</title>
        <authorList>
            <person name="Genau H.M."/>
            <person name="Huber J."/>
            <person name="Baschieri F."/>
            <person name="Akutsu M."/>
            <person name="Doetsch V."/>
            <person name="Farhan H."/>
            <person name="Rogov V."/>
            <person name="Behrends C."/>
        </authorList>
    </citation>
    <scope>FUNCTION</scope>
    <scope>SUBUNIT</scope>
</reference>
<reference key="54">
    <citation type="journal article" date="2015" name="Nature">
        <title>Cell-fate determination by ubiquitin-dependent regulation of translation.</title>
        <authorList>
            <person name="Werner A."/>
            <person name="Iwasaki S."/>
            <person name="McGourty C.A."/>
            <person name="Medina-Ruiz S."/>
            <person name="Teerikorpi N."/>
            <person name="Fedrigo I."/>
            <person name="Ingolia N.T."/>
            <person name="Rape M."/>
        </authorList>
    </citation>
    <scope>FUNCTION</scope>
    <scope>INTERACTION WITH KBTBD8</scope>
</reference>
<reference key="55">
    <citation type="journal article" date="2016" name="Cell">
        <title>Regulation of the CUL3 ubiquitin ligase by a calcium-dependent co-adaptor.</title>
        <authorList>
            <person name="McGourty C.A."/>
            <person name="Akopian D."/>
            <person name="Walsh C."/>
            <person name="Gorur A."/>
            <person name="Werner A."/>
            <person name="Schekman R."/>
            <person name="Bautista D."/>
            <person name="Rape M."/>
        </authorList>
    </citation>
    <scope>FUNCTION</scope>
</reference>
<reference key="56">
    <citation type="journal article" date="2016" name="Cell">
        <title>Two distinct types of E3 ligases work in unison to regulate substrate ubiquitylation.</title>
        <authorList>
            <person name="Scott D.C."/>
            <person name="Rhee D.Y."/>
            <person name="Duda D.M."/>
            <person name="Kelsall I.R."/>
            <person name="Olszewski J.L."/>
            <person name="Paulo J.A."/>
            <person name="de Jong A."/>
            <person name="Ovaa H."/>
            <person name="Alpi A.F."/>
            <person name="Harper J.W."/>
            <person name="Schulman B.A."/>
        </authorList>
    </citation>
    <scope>FUNCTION</scope>
    <scope>INTERACTION WITH ARIH1</scope>
    <scope>NEDDYLATION</scope>
</reference>
<reference key="57">
    <citation type="journal article" date="2016" name="Genes Dev.">
        <title>Cullin3-KLHL25 ubiquitin ligase targets ACLY for degradation to inhibit lipid synthesis and tumor progression.</title>
        <authorList>
            <person name="Zhang C."/>
            <person name="Liu J."/>
            <person name="Huang G."/>
            <person name="Zhao Y."/>
            <person name="Yue X."/>
            <person name="Wu H."/>
            <person name="Li J."/>
            <person name="Zhu J."/>
            <person name="Shen Z."/>
            <person name="Haffty B.G."/>
            <person name="Hu W."/>
            <person name="Feng Z."/>
        </authorList>
    </citation>
    <scope>FUNCTION</scope>
    <scope>PATHWAY</scope>
    <scope>IDENTIFICATION IN THE BCR(KLHL25) UBIQUITIN LIGASE COMPLEX</scope>
</reference>
<reference key="58">
    <citation type="journal article" date="2016" name="J. Cell Sci.">
        <title>Characterization of the mammalian family of DCN-type NEDD8 E3 ligases.</title>
        <authorList>
            <person name="Keuss M.J."/>
            <person name="Thomas Y."/>
            <person name="Mcarthur R."/>
            <person name="Wood N.T."/>
            <person name="Knebel A."/>
            <person name="Kurz T."/>
        </authorList>
    </citation>
    <scope>INTERACTION WITH DCUN1D1; DCUN1D2; DCUN1D3; DCUN1D4 AND DCUN1D5</scope>
</reference>
<reference key="59">
    <citation type="journal article" date="2016" name="Nat. Commun.">
        <title>Cullin3-KLHL15 ubiquitin ligase mediates CtIP protein turnover to fine-tune DNA-end resection.</title>
        <authorList>
            <person name="Ferretti L.P."/>
            <person name="Himmels S.F."/>
            <person name="Trenner A."/>
            <person name="Walker C."/>
            <person name="von Aesch C."/>
            <person name="Eggenschwiler A."/>
            <person name="Murina O."/>
            <person name="Enchev R.I."/>
            <person name="Peter M."/>
            <person name="Freire R."/>
            <person name="Porro A."/>
            <person name="Sartori A.A."/>
        </authorList>
    </citation>
    <scope>INTERACTION WITH KLHL15 AND RBBP8</scope>
    <scope>NEDDYLATION</scope>
</reference>
<reference key="60">
    <citation type="journal article" date="2016" name="Nat. Genet.">
        <title>Stabilizing mutations of KLHL24 ubiquitin ligase cause loss of keratin 14 and human skin fragility.</title>
        <authorList>
            <person name="Lin Z."/>
            <person name="Li S."/>
            <person name="Feng C."/>
            <person name="Yang S."/>
            <person name="Wang H."/>
            <person name="Ma D."/>
            <person name="Zhang J."/>
            <person name="Gou M."/>
            <person name="Bu D."/>
            <person name="Zhang T."/>
            <person name="Kong X."/>
            <person name="Wang X."/>
            <person name="Sarig O."/>
            <person name="Ren Y."/>
            <person name="Dai L."/>
            <person name="Liu H."/>
            <person name="Zhang J."/>
            <person name="Li F."/>
            <person name="Hu Y."/>
            <person name="Padalon-Brauch G."/>
            <person name="Vodo D."/>
            <person name="Zhou F."/>
            <person name="Chen T."/>
            <person name="Deng H."/>
            <person name="Sprecher E."/>
            <person name="Yang Y."/>
            <person name="Tan X."/>
        </authorList>
    </citation>
    <scope>FUNCTION</scope>
    <scope>IDENTIFICATION IN THE BCR(KLHL24) COMPLEX</scope>
    <scope>INTERACTION WITH KLHL24</scope>
</reference>
<reference key="61">
    <citation type="journal article" date="2016" name="Proc. Natl. Acad. Sci. U.S.A.">
        <title>Insulin resistance and diabetes caused by genetic or diet-induced KBTBD2 deficiency in mice.</title>
        <authorList>
            <person name="Zhang Z."/>
            <person name="Turer E."/>
            <person name="Li X."/>
            <person name="Zhan X."/>
            <person name="Choi M."/>
            <person name="Tang M."/>
            <person name="Press A."/>
            <person name="Smith S.R."/>
            <person name="Divoux A."/>
            <person name="Moresco E.M."/>
            <person name="Beutler B."/>
        </authorList>
    </citation>
    <scope>IDENTIFICATION IN BCR(KBTBD2) E3 UBIQUITIN LIGASE COMPLEX</scope>
</reference>
<reference key="62">
    <citation type="journal article" date="2017" name="Biol. Reprod.">
        <title>Defining the human sperm microtubulome: an integrated genomics approach.</title>
        <authorList>
            <person name="Jumeau F."/>
            <person name="Chalmel F."/>
            <person name="Fernandez-Gomez F.J."/>
            <person name="Carpentier C."/>
            <person name="Obriot H."/>
            <person name="Tardivel M."/>
            <person name="Caillet-Boudin M.L."/>
            <person name="Rigot J.M."/>
            <person name="Rives N."/>
            <person name="Buee L."/>
            <person name="Sergeant N."/>
            <person name="Mitchell V."/>
        </authorList>
    </citation>
    <scope>SUBCELLULAR LOCATION</scope>
    <scope>TISSUE SPECIFICITY</scope>
</reference>
<reference key="63">
    <citation type="journal article" date="2018" name="Am. J. Hum. Genet.">
        <title>Missense variants in RHOBTB2 cause a developmental and epileptic encephalopathy in humans, and altered levels cause neurological defects in Drosophila.</title>
        <authorList>
            <consortium name="Deciphering Developmental Disorders Study"/>
            <person name="Straub J."/>
            <person name="Konrad E.D.H."/>
            <person name="Gruener J."/>
            <person name="Toutain A."/>
            <person name="Bok L.A."/>
            <person name="Cho M.T."/>
            <person name="Crawford H.P."/>
            <person name="Dubbs H."/>
            <person name="Douglas G."/>
            <person name="Jobling R."/>
            <person name="Johnson D."/>
            <person name="Krock B."/>
            <person name="Mikati M.A."/>
            <person name="Nesbitt A."/>
            <person name="Nicolai J."/>
            <person name="Phillips M."/>
            <person name="Poduri A."/>
            <person name="Ortiz-Gonzalez X.R."/>
            <person name="Powis Z."/>
            <person name="Santani A."/>
            <person name="Smith L."/>
            <person name="Stegmann A.P.A."/>
            <person name="Stumpel C."/>
            <person name="Vreeburg M."/>
            <person name="Fliedner A."/>
            <person name="Gregor A."/>
            <person name="Sticht H."/>
            <person name="Zweier C."/>
        </authorList>
    </citation>
    <scope>INTERACTION WITH RHOBTB2</scope>
</reference>
<reference key="64">
    <citation type="journal article" date="2018" name="Nature">
        <title>KLHL22 activates amino-acid-dependent mTORC1 signalling to promote tumorigenesis and ageing.</title>
        <authorList>
            <person name="Chen J."/>
            <person name="Ou Y."/>
            <person name="Yang Y."/>
            <person name="Li W."/>
            <person name="Xu Y."/>
            <person name="Xie Y."/>
            <person name="Liu Y."/>
        </authorList>
    </citation>
    <scope>FUNCTION</scope>
</reference>
<reference key="65">
    <citation type="journal article" date="2021" name="Cell Stem Cell">
        <title>UM171 Preserves Epigenetic Marks that Are Reduced in Ex Vivo Culture of Human HSCs via Potentiation of the CLR3-KBTBD4 Complex.</title>
        <authorList>
            <person name="Chagraoui J."/>
            <person name="Girard S."/>
            <person name="Spinella J.F."/>
            <person name="Simon L."/>
            <person name="Bonneil E."/>
            <person name="Mayotte N."/>
            <person name="MacRae T."/>
            <person name="Coulombe-Huntington J."/>
            <person name="Bertomeu T."/>
            <person name="Moison C."/>
            <person name="Tomellini E."/>
            <person name="Thibault P."/>
            <person name="Tyers M."/>
            <person name="Marinier A."/>
            <person name="Sauvageau G."/>
        </authorList>
    </citation>
    <scope>FUNCTION</scope>
    <scope>IDENTIFICATION IN THE BCR(KBTBD4) UBIQUITIN LIGASE COMPLEX</scope>
</reference>
<reference key="66">
    <citation type="journal article" date="2022" name="JCI Insight">
        <title>ARMC5-CUL3 E3 ligase targets full-length SREBF in adrenocortical tumors.</title>
        <authorList>
            <person name="Okuno Y."/>
            <person name="Fukuhara A."/>
            <person name="Otsuki M."/>
            <person name="Shimomura I."/>
        </authorList>
    </citation>
    <scope>IDENTIFICATION IN THE BCR(ARMC5) UBIQUITIN LIGASE COMPLEX</scope>
</reference>
<reference key="67">
    <citation type="journal article" date="2022" name="Nucleic Acids Res.">
        <title>ARMC5 is part of an RPB1-specific ubiquitin ligase implicated in adrenal hyperplasia.</title>
        <authorList>
            <person name="Lao L."/>
            <person name="Bourdeau I."/>
            <person name="Gagliardi L."/>
            <person name="He X."/>
            <person name="Shi W."/>
            <person name="Hao B."/>
            <person name="Tan M."/>
            <person name="Hu Y."/>
            <person name="Peng J."/>
            <person name="Coulombe B."/>
            <person name="Torpy D.J."/>
            <person name="Scott H.S."/>
            <person name="Lacroix A."/>
            <person name="Luo H."/>
            <person name="Wu J."/>
        </authorList>
    </citation>
    <scope>FUNCTION</scope>
    <scope>PATHWAY</scope>
    <scope>IDENTIFICATION IN THE BCR(ARMC5) UBIQUITIN LIGASE COMPLEX</scope>
</reference>
<reference key="68">
    <citation type="journal article" date="2023" name="FEBS J.">
        <title>CUL3 induces mitochondrial dysfunction via MRPL12 ubiquitination in renal tubular epithelial cells.</title>
        <authorList>
            <person name="Ji X."/>
            <person name="Yang X."/>
            <person name="Gu X."/>
            <person name="Chu L."/>
            <person name="Sun S."/>
            <person name="Sun J."/>
            <person name="Song P."/>
            <person name="Mu Q."/>
            <person name="Wang Y."/>
            <person name="Sun X."/>
            <person name="Su D."/>
            <person name="Su T."/>
            <person name="Hou S."/>
            <person name="Lu Y."/>
            <person name="Ma C."/>
            <person name="Liu M."/>
            <person name="Zhang T."/>
            <person name="Zhang W."/>
            <person name="Liu Y."/>
            <person name="Wan Q."/>
        </authorList>
    </citation>
    <scope>FUNCTION</scope>
</reference>
<reference key="69">
    <citation type="journal article" date="2023" name="J. Biol. Chem.">
        <title>The stem cell-supporting small molecule UM171 triggers Cul3-KBTBD4-mediated degradation of ELM2 domain-harboring proteins.</title>
        <authorList>
            <person name="Zemaitis K."/>
            <person name="Ghosh S."/>
            <person name="Hansson J."/>
            <person name="Subramaniam A."/>
        </authorList>
    </citation>
    <scope>FUNCTION</scope>
</reference>
<reference key="70">
    <citation type="journal article" date="2024" name="Genome Biol.">
        <title>ARMC5 controls the degradation of most Pol II subunits, and ARMC5 mutation increases neural tube defect risks in mice and humans.</title>
        <authorList>
            <person name="Luo H."/>
            <person name="Lao L."/>
            <person name="Au K.S."/>
            <person name="Northrup H."/>
            <person name="He X."/>
            <person name="Forget D."/>
            <person name="Gauthier M.S."/>
            <person name="Coulombe B."/>
            <person name="Bourdeau I."/>
            <person name="Shi W."/>
            <person name="Gagliardi L."/>
            <person name="Fragoso M.C.B.V."/>
            <person name="Peng J."/>
            <person name="Wu J."/>
        </authorList>
    </citation>
    <scope>FUNCTION</scope>
    <scope>PATHWAY</scope>
    <scope>IDENTIFICATION IN THE BCR(ARMC5) UBIQUITIN LIGASE COMPLEX</scope>
</reference>
<reference key="71">
    <citation type="journal article" date="2024" name="Mol. Cell">
        <title>Redundant pathways for removal of defective RNA polymerase II complexes at a promoter-proximal pause checkpoint.</title>
        <authorList>
            <person name="Blears D."/>
            <person name="Lou J."/>
            <person name="Fong N."/>
            <person name="Mitter R."/>
            <person name="Sheridan R.M."/>
            <person name="He D."/>
            <person name="Dirac-Svejstrup A.B."/>
            <person name="Bentley D."/>
            <person name="Svejstrup J.Q."/>
        </authorList>
    </citation>
    <scope>FUNCTION</scope>
    <scope>PATHWAY</scope>
    <scope>IDENTIFICATION IN THE BCR(ARMC5) UBIQUITIN LIGASE COMPLEX</scope>
</reference>
<reference key="72">
    <citation type="journal article" date="2024" name="Mol. Cell">
        <title>CRL3ARMC5 ubiquitin ligase and Integrator phosphatase form parallel mechanisms to control early stages of RNA Pol II transcription.</title>
        <authorList>
            <person name="Cacioppo R."/>
            <person name="Gillis A."/>
            <person name="Shlamovitz I."/>
            <person name="Zeller A."/>
            <person name="Castiblanco D."/>
            <person name="Crisp A."/>
            <person name="Haworth B."/>
            <person name="Arabiotorre A."/>
            <person name="Abyaneh P."/>
            <person name="Bao Y."/>
            <person name="Sale J.E."/>
            <person name="Berry S."/>
            <person name="Tufegdzic Vidakovic A."/>
        </authorList>
    </citation>
    <scope>FUNCTION</scope>
    <scope>PATHWAY</scope>
    <scope>IDENTIFICATION IN THE BCR(ARMC5) UBIQUITIN LIGASE COMPLEX</scope>
</reference>
<reference key="73">
    <citation type="journal article" date="2012" name="Structure">
        <title>Adaptor protein self-assembly drives the control of a cullin-RING ubiquitin ligase.</title>
        <authorList>
            <person name="Errington W.J."/>
            <person name="Khan M.Q."/>
            <person name="Bueler S.A."/>
            <person name="Rubinstein J.L."/>
            <person name="Chakrabartty A."/>
            <person name="Prive G.G."/>
        </authorList>
    </citation>
    <scope>X-RAY CRYSTALLOGRAPHY (2.4 ANGSTROMS) OF 20-381 IN COMPLEX WITH SPOP</scope>
    <scope>FUNCTION</scope>
    <scope>IDENTIFICATION IN UBIQUITIN LIGASE COMPLEXES WITH SPOP AND SPOPL</scope>
    <scope>SUBUNIT</scope>
</reference>
<reference key="74">
    <citation type="journal article" date="2013" name="PLoS ONE">
        <title>Crystal structure of KLHL3 in complex with Cullin3.</title>
        <authorList>
            <person name="Ji A.X."/>
            <person name="Prive G.G."/>
        </authorList>
    </citation>
    <scope>X-RAY CRYSTALLOGRAPHY (3.51 ANGSTROMS) OF 20-381 IN COMPLEX WITH KLHL3</scope>
</reference>
<reference key="75">
    <citation type="journal article" date="2013" name="J. Biol. Chem.">
        <title>Structural basis for Cul3 assembly with the BTB-Kelch family of E3 ubiquitin ligases.</title>
        <authorList>
            <person name="Canning P."/>
            <person name="Cooper C.D."/>
            <person name="Krojer T."/>
            <person name="Murray J.W."/>
            <person name="Pike A.C."/>
            <person name="Chaikuad A."/>
            <person name="Keates T."/>
            <person name="Thangaratnarajah C."/>
            <person name="Hojzan V."/>
            <person name="Marsden B.D."/>
            <person name="Gileadi O."/>
            <person name="Knapp S."/>
            <person name="von Delft F."/>
            <person name="Bullock A.N."/>
        </authorList>
    </citation>
    <scope>X-RAY CRYSTALLOGRAPHY (2.8 ANGSTROMS) OF 1-388 IN COMPLEX WITH KLHL11</scope>
    <scope>INTERACTION WITH KLHL11</scope>
</reference>
<reference key="76">
    <citation type="journal article" date="2012" name="Nature">
        <title>Mutations in kelch-like 3 and cullin 3 cause hypertension and electrolyte abnormalities.</title>
        <authorList>
            <person name="Boyden L.M."/>
            <person name="Choi M."/>
            <person name="Choate K.A."/>
            <person name="Nelson-Williams C.J."/>
            <person name="Farhi A."/>
            <person name="Toka H.R."/>
            <person name="Tikhonova I.R."/>
            <person name="Bjornson R."/>
            <person name="Mane S.M."/>
            <person name="Colussi G."/>
            <person name="Lebel M."/>
            <person name="Gordon R.D."/>
            <person name="Semmekrot B.A."/>
            <person name="Poujol A."/>
            <person name="Valimaki M.J."/>
            <person name="De Ferrari M.E."/>
            <person name="Sanjad S.A."/>
            <person name="Gutkin M."/>
            <person name="Karet F.E."/>
            <person name="Tucci J.R."/>
            <person name="Stockigt J.R."/>
            <person name="Keppler-Noreuil K.M."/>
            <person name="Porter C.C."/>
            <person name="Anand S.K."/>
            <person name="Whiteford M.L."/>
            <person name="Davis I.D."/>
            <person name="Dewar S.B."/>
            <person name="Bettinelli A."/>
            <person name="Fadrowski J.J."/>
            <person name="Belsha C.W."/>
            <person name="Hunley T.E."/>
            <person name="Nelson R.D."/>
            <person name="Trachtman H."/>
            <person name="Cole T.R."/>
            <person name="Pinsk M."/>
            <person name="Bockenhauer D."/>
            <person name="Shenoy M."/>
            <person name="Vaidyanathan P."/>
            <person name="Foreman J.W."/>
            <person name="Rasoulpour M."/>
            <person name="Thameem F."/>
            <person name="Al-Shahrouri H.Z."/>
            <person name="Radhakrishnan J."/>
            <person name="Gharavi A.G."/>
            <person name="Goilav B."/>
            <person name="Lifton R.P."/>
        </authorList>
    </citation>
    <scope>VARIANTS PHA2E GLY-413 AND ARG-459</scope>
</reference>
<reference key="77">
    <citation type="journal article" date="2015" name="Mol. Autism">
        <title>Integrated analysis of whole-exome sequencing and transcriptome profiling in males with autism spectrum disorders.</title>
        <authorList>
            <person name="Codina-Sola M."/>
            <person name="Rodriguez-Santiago B."/>
            <person name="Homs A."/>
            <person name="Santoyo J."/>
            <person name="Rigau M."/>
            <person name="Aznar-Lain G."/>
            <person name="Del Campo M."/>
            <person name="Gener B."/>
            <person name="Gabau E."/>
            <person name="Botella M.P."/>
            <person name="Gutierrez-Arumi A."/>
            <person name="Antinolo G."/>
            <person name="Perez-Jurado L.A."/>
            <person name="Cusco I."/>
        </authorList>
    </citation>
    <scope>VARIANT ARG-719</scope>
</reference>
<reference key="78">
    <citation type="journal article" date="2020" name="J. Hum. Genet.">
        <title>De novo variants in CUL3 are associated with global developmental delays with or without infantile spasms.</title>
        <authorList>
            <person name="Nakashima M."/>
            <person name="Kato M."/>
            <person name="Matsukura M."/>
            <person name="Kira R."/>
            <person name="Ngu L.H."/>
            <person name="Lichtenbelt K.D."/>
            <person name="van Gassen K.L.I."/>
            <person name="Mitsuhashi S."/>
            <person name="Saitsu H."/>
            <person name="Matsumoto N."/>
        </authorList>
    </citation>
    <scope>VARIANT NEDAUS ALA-285</scope>
    <scope>CHARACTERIZATION OF VARIANT NEDAUS ALA-285</scope>
    <scope>INTERACTION WITH KEAP1</scope>
</reference>
<reference key="79">
    <citation type="journal article" date="2021" name="Brain Dev.">
        <title>A novel stop-gain CUL3 mutation in a Japanese patient with autism spectrum disorder.</title>
        <authorList>
            <person name="Iwafuchi S."/>
            <person name="Kikuchi A."/>
            <person name="Endo W."/>
            <person name="Inui T."/>
            <person name="Aihara Y."/>
            <person name="Satou K."/>
            <person name="Kaname T."/>
            <person name="Kure S."/>
        </authorList>
    </citation>
    <scope>VARIANT NEDAUS 587-THR--ALA-768 DEL</scope>
</reference>
<evidence type="ECO:0000250" key="1">
    <source>
        <dbReference type="UniProtKB" id="Q13616"/>
    </source>
</evidence>
<evidence type="ECO:0000250" key="2">
    <source>
        <dbReference type="UniProtKB" id="Q9JLV5"/>
    </source>
</evidence>
<evidence type="ECO:0000255" key="3"/>
<evidence type="ECO:0000255" key="4">
    <source>
        <dbReference type="PROSITE-ProRule" id="PRU00330"/>
    </source>
</evidence>
<evidence type="ECO:0000256" key="5">
    <source>
        <dbReference type="SAM" id="MobiDB-lite"/>
    </source>
</evidence>
<evidence type="ECO:0000269" key="6">
    <source>
    </source>
</evidence>
<evidence type="ECO:0000269" key="7">
    <source>
    </source>
</evidence>
<evidence type="ECO:0000269" key="8">
    <source>
    </source>
</evidence>
<evidence type="ECO:0000269" key="9">
    <source>
    </source>
</evidence>
<evidence type="ECO:0000269" key="10">
    <source>
    </source>
</evidence>
<evidence type="ECO:0000269" key="11">
    <source>
    </source>
</evidence>
<evidence type="ECO:0000269" key="12">
    <source>
    </source>
</evidence>
<evidence type="ECO:0000269" key="13">
    <source>
    </source>
</evidence>
<evidence type="ECO:0000269" key="14">
    <source>
    </source>
</evidence>
<evidence type="ECO:0000269" key="15">
    <source>
    </source>
</evidence>
<evidence type="ECO:0000269" key="16">
    <source>
    </source>
</evidence>
<evidence type="ECO:0000269" key="17">
    <source>
    </source>
</evidence>
<evidence type="ECO:0000269" key="18">
    <source>
    </source>
</evidence>
<evidence type="ECO:0000269" key="19">
    <source>
    </source>
</evidence>
<evidence type="ECO:0000269" key="20">
    <source>
    </source>
</evidence>
<evidence type="ECO:0000269" key="21">
    <source>
    </source>
</evidence>
<evidence type="ECO:0000269" key="22">
    <source>
    </source>
</evidence>
<evidence type="ECO:0000269" key="23">
    <source>
    </source>
</evidence>
<evidence type="ECO:0000269" key="24">
    <source>
    </source>
</evidence>
<evidence type="ECO:0000269" key="25">
    <source>
    </source>
</evidence>
<evidence type="ECO:0000269" key="26">
    <source>
    </source>
</evidence>
<evidence type="ECO:0000269" key="27">
    <source>
    </source>
</evidence>
<evidence type="ECO:0000269" key="28">
    <source>
    </source>
</evidence>
<evidence type="ECO:0000269" key="29">
    <source>
    </source>
</evidence>
<evidence type="ECO:0000269" key="30">
    <source>
    </source>
</evidence>
<evidence type="ECO:0000269" key="31">
    <source>
    </source>
</evidence>
<evidence type="ECO:0000269" key="32">
    <source>
    </source>
</evidence>
<evidence type="ECO:0000269" key="33">
    <source>
    </source>
</evidence>
<evidence type="ECO:0000269" key="34">
    <source>
    </source>
</evidence>
<evidence type="ECO:0000269" key="35">
    <source>
    </source>
</evidence>
<evidence type="ECO:0000269" key="36">
    <source>
    </source>
</evidence>
<evidence type="ECO:0000269" key="37">
    <source>
    </source>
</evidence>
<evidence type="ECO:0000269" key="38">
    <source>
    </source>
</evidence>
<evidence type="ECO:0000269" key="39">
    <source>
    </source>
</evidence>
<evidence type="ECO:0000269" key="40">
    <source>
    </source>
</evidence>
<evidence type="ECO:0000269" key="41">
    <source>
    </source>
</evidence>
<evidence type="ECO:0000269" key="42">
    <source>
    </source>
</evidence>
<evidence type="ECO:0000269" key="43">
    <source>
    </source>
</evidence>
<evidence type="ECO:0000269" key="44">
    <source>
    </source>
</evidence>
<evidence type="ECO:0000269" key="45">
    <source>
    </source>
</evidence>
<evidence type="ECO:0000269" key="46">
    <source>
    </source>
</evidence>
<evidence type="ECO:0000269" key="47">
    <source>
    </source>
</evidence>
<evidence type="ECO:0000269" key="48">
    <source>
    </source>
</evidence>
<evidence type="ECO:0000269" key="49">
    <source>
    </source>
</evidence>
<evidence type="ECO:0000269" key="50">
    <source>
    </source>
</evidence>
<evidence type="ECO:0000269" key="51">
    <source>
    </source>
</evidence>
<evidence type="ECO:0000269" key="52">
    <source>
    </source>
</evidence>
<evidence type="ECO:0000269" key="53">
    <source>
    </source>
</evidence>
<evidence type="ECO:0000269" key="54">
    <source>
    </source>
</evidence>
<evidence type="ECO:0000269" key="55">
    <source>
    </source>
</evidence>
<evidence type="ECO:0000269" key="56">
    <source>
    </source>
</evidence>
<evidence type="ECO:0000269" key="57">
    <source>
    </source>
</evidence>
<evidence type="ECO:0000269" key="58">
    <source>
    </source>
</evidence>
<evidence type="ECO:0000269" key="59">
    <source>
    </source>
</evidence>
<evidence type="ECO:0000269" key="60">
    <source>
    </source>
</evidence>
<evidence type="ECO:0000269" key="61">
    <source>
    </source>
</evidence>
<evidence type="ECO:0000269" key="62">
    <source>
    </source>
</evidence>
<evidence type="ECO:0000269" key="63">
    <source>
    </source>
</evidence>
<evidence type="ECO:0000269" key="64">
    <source>
    </source>
</evidence>
<evidence type="ECO:0000269" key="65">
    <source>
    </source>
</evidence>
<evidence type="ECO:0000269" key="66">
    <source>
    </source>
</evidence>
<evidence type="ECO:0000269" key="67">
    <source>
    </source>
</evidence>
<evidence type="ECO:0000269" key="68">
    <source>
    </source>
</evidence>
<evidence type="ECO:0000269" key="69">
    <source>
    </source>
</evidence>
<evidence type="ECO:0000303" key="70">
    <source ref="4"/>
</evidence>
<evidence type="ECO:0000305" key="71"/>
<evidence type="ECO:0000312" key="72">
    <source>
        <dbReference type="HGNC" id="HGNC:2553"/>
    </source>
</evidence>
<evidence type="ECO:0007744" key="73">
    <source>
    </source>
</evidence>
<evidence type="ECO:0007744" key="74">
    <source>
    </source>
</evidence>
<evidence type="ECO:0007829" key="75">
    <source>
        <dbReference type="PDB" id="6I2M"/>
    </source>
</evidence>
<dbReference type="EMBL" id="AF064087">
    <property type="protein sequence ID" value="AAC36304.1"/>
    <property type="molecule type" value="mRNA"/>
</dbReference>
<dbReference type="EMBL" id="AB014517">
    <property type="protein sequence ID" value="BAA31592.2"/>
    <property type="status" value="ALT_INIT"/>
    <property type="molecule type" value="mRNA"/>
</dbReference>
<dbReference type="EMBL" id="AF062537">
    <property type="protein sequence ID" value="AAC36682.1"/>
    <property type="status" value="ALT_FRAME"/>
    <property type="molecule type" value="mRNA"/>
</dbReference>
<dbReference type="EMBL" id="AY337761">
    <property type="protein sequence ID" value="AAQ01660.1"/>
    <property type="molecule type" value="mRNA"/>
</dbReference>
<dbReference type="EMBL" id="AK291151">
    <property type="protein sequence ID" value="BAF83840.1"/>
    <property type="molecule type" value="mRNA"/>
</dbReference>
<dbReference type="EMBL" id="AC073052">
    <property type="status" value="NOT_ANNOTATED_CDS"/>
    <property type="molecule type" value="Genomic_DNA"/>
</dbReference>
<dbReference type="EMBL" id="AC092679">
    <property type="status" value="NOT_ANNOTATED_CDS"/>
    <property type="molecule type" value="Genomic_DNA"/>
</dbReference>
<dbReference type="EMBL" id="CH471063">
    <property type="protein sequence ID" value="EAW70828.1"/>
    <property type="molecule type" value="Genomic_DNA"/>
</dbReference>
<dbReference type="EMBL" id="BC031844">
    <property type="protein sequence ID" value="AAH31844.1"/>
    <property type="molecule type" value="mRNA"/>
</dbReference>
<dbReference type="EMBL" id="BC039598">
    <property type="protein sequence ID" value="AAH39598.1"/>
    <property type="molecule type" value="mRNA"/>
</dbReference>
<dbReference type="EMBL" id="BC092409">
    <property type="protein sequence ID" value="AAH92409.1"/>
    <property type="molecule type" value="mRNA"/>
</dbReference>
<dbReference type="EMBL" id="U58089">
    <property type="protein sequence ID" value="AAC50546.1"/>
    <property type="molecule type" value="mRNA"/>
</dbReference>
<dbReference type="EMBL" id="AF052147">
    <property type="protein sequence ID" value="AAC28621.1"/>
    <property type="status" value="ALT_FRAME"/>
    <property type="molecule type" value="mRNA"/>
</dbReference>
<dbReference type="CCDS" id="CCDS2462.1">
    <molecule id="Q13618-1"/>
</dbReference>
<dbReference type="CCDS" id="CCDS58751.1">
    <molecule id="Q13618-3"/>
</dbReference>
<dbReference type="RefSeq" id="NP_001244126.1">
    <molecule id="Q13618-3"/>
    <property type="nucleotide sequence ID" value="NM_001257197.2"/>
</dbReference>
<dbReference type="RefSeq" id="NP_001244127.1">
    <property type="nucleotide sequence ID" value="NM_001257198.1"/>
</dbReference>
<dbReference type="RefSeq" id="NP_003581.1">
    <molecule id="Q13618-1"/>
    <property type="nucleotide sequence ID" value="NM_003590.5"/>
</dbReference>
<dbReference type="PDB" id="2MYL">
    <property type="method" value="NMR"/>
    <property type="chains" value="A=49-68"/>
</dbReference>
<dbReference type="PDB" id="2MYM">
    <property type="method" value="NMR"/>
    <property type="chains" value="A=49-68"/>
</dbReference>
<dbReference type="PDB" id="4AP2">
    <property type="method" value="X-ray"/>
    <property type="resolution" value="2.80 A"/>
    <property type="chains" value="B=1-388"/>
</dbReference>
<dbReference type="PDB" id="4APF">
    <property type="method" value="X-ray"/>
    <property type="resolution" value="3.10 A"/>
    <property type="chains" value="B=23-388"/>
</dbReference>
<dbReference type="PDB" id="4EOZ">
    <property type="method" value="X-ray"/>
    <property type="resolution" value="2.40 A"/>
    <property type="chains" value="B/D=20-381"/>
</dbReference>
<dbReference type="PDB" id="4HXI">
    <property type="method" value="X-ray"/>
    <property type="resolution" value="3.51 A"/>
    <property type="chains" value="B=20-381"/>
</dbReference>
<dbReference type="PDB" id="5NLB">
    <property type="method" value="X-ray"/>
    <property type="resolution" value="3.45 A"/>
    <property type="chains" value="B=26-381"/>
</dbReference>
<dbReference type="PDB" id="6I2M">
    <property type="method" value="X-ray"/>
    <property type="resolution" value="2.30 A"/>
    <property type="chains" value="B=23-388"/>
</dbReference>
<dbReference type="PDB" id="8GQ6">
    <property type="method" value="EM"/>
    <property type="resolution" value="3.96 A"/>
    <property type="chains" value="C/F=1-768"/>
</dbReference>
<dbReference type="PDB" id="8H33">
    <property type="method" value="EM"/>
    <property type="resolution" value="7.86 A"/>
    <property type="chains" value="C/F/H/I=1-768"/>
</dbReference>
<dbReference type="PDB" id="8H34">
    <property type="method" value="EM"/>
    <property type="resolution" value="7.99 A"/>
    <property type="chains" value="C/F/H/I/M/O=1-768"/>
</dbReference>
<dbReference type="PDB" id="8H35">
    <property type="method" value="EM"/>
    <property type="resolution" value="7.41 A"/>
    <property type="chains" value="C/F/H/I/M/O/T/V=1-768"/>
</dbReference>
<dbReference type="PDB" id="8H36">
    <property type="method" value="EM"/>
    <property type="resolution" value="4.60 A"/>
    <property type="chains" value="C/F=1-768"/>
</dbReference>
<dbReference type="PDB" id="8H37">
    <property type="method" value="EM"/>
    <property type="resolution" value="7.52 A"/>
    <property type="chains" value="C/F/M/O=1-768"/>
</dbReference>
<dbReference type="PDB" id="8H38">
    <property type="method" value="EM"/>
    <property type="resolution" value="4.25 A"/>
    <property type="chains" value="L=1-768"/>
</dbReference>
<dbReference type="PDB" id="8H3A">
    <property type="method" value="EM"/>
    <property type="resolution" value="7.51 A"/>
    <property type="chains" value="L=1-768"/>
</dbReference>
<dbReference type="PDB" id="8H3F">
    <property type="method" value="EM"/>
    <property type="resolution" value="6.73 A"/>
    <property type="chains" value="L=1-768"/>
</dbReference>
<dbReference type="PDB" id="8H3Q">
    <property type="method" value="EM"/>
    <property type="resolution" value="3.76 A"/>
    <property type="chains" value="C=1-768"/>
</dbReference>
<dbReference type="PDB" id="8H3R">
    <property type="method" value="EM"/>
    <property type="resolution" value="6.36 A"/>
    <property type="chains" value="C/F=1-768"/>
</dbReference>
<dbReference type="PDB" id="8I79">
    <property type="method" value="EM"/>
    <property type="resolution" value="2.80 A"/>
    <property type="chains" value="B/C/E/H/J=22-388"/>
</dbReference>
<dbReference type="PDB" id="8K8T">
    <property type="method" value="EM"/>
    <property type="resolution" value="3.80 A"/>
    <property type="chains" value="C/D=1-768"/>
</dbReference>
<dbReference type="PDB" id="8K9I">
    <property type="method" value="EM"/>
    <property type="resolution" value="4.20 A"/>
    <property type="chains" value="C=25-768"/>
</dbReference>
<dbReference type="PDB" id="8KHP">
    <property type="method" value="EM"/>
    <property type="resolution" value="3.67 A"/>
    <property type="chains" value="C/D=1-768"/>
</dbReference>
<dbReference type="PDB" id="8U80">
    <property type="method" value="EM"/>
    <property type="resolution" value="3.60 A"/>
    <property type="chains" value="C1/C2/C3/C4/C5=1-381"/>
</dbReference>
<dbReference type="PDB" id="8U81">
    <property type="method" value="EM"/>
    <property type="resolution" value="3.82 A"/>
    <property type="chains" value="C1/C2/C3/C4/C5=1-381"/>
</dbReference>
<dbReference type="PDB" id="8U82">
    <property type="method" value="EM"/>
    <property type="resolution" value="3.84 A"/>
    <property type="chains" value="C1/C2/C3/C4/C5=2-381"/>
</dbReference>
<dbReference type="PDB" id="8U83">
    <property type="method" value="EM"/>
    <property type="resolution" value="3.98 A"/>
    <property type="chains" value="C1/C2/C3/C4/C5=1-381"/>
</dbReference>
<dbReference type="PDB" id="8U84">
    <property type="method" value="EM"/>
    <property type="resolution" value="3.88 A"/>
    <property type="chains" value="C1/C2/C3/C4/C5=1-381"/>
</dbReference>
<dbReference type="PDBsum" id="2MYL"/>
<dbReference type="PDBsum" id="2MYM"/>
<dbReference type="PDBsum" id="4AP2"/>
<dbReference type="PDBsum" id="4APF"/>
<dbReference type="PDBsum" id="4EOZ"/>
<dbReference type="PDBsum" id="4HXI"/>
<dbReference type="PDBsum" id="5NLB"/>
<dbReference type="PDBsum" id="6I2M"/>
<dbReference type="PDBsum" id="8GQ6"/>
<dbReference type="PDBsum" id="8H33"/>
<dbReference type="PDBsum" id="8H34"/>
<dbReference type="PDBsum" id="8H35"/>
<dbReference type="PDBsum" id="8H36"/>
<dbReference type="PDBsum" id="8H37"/>
<dbReference type="PDBsum" id="8H38"/>
<dbReference type="PDBsum" id="8H3A"/>
<dbReference type="PDBsum" id="8H3F"/>
<dbReference type="PDBsum" id="8H3Q"/>
<dbReference type="PDBsum" id="8H3R"/>
<dbReference type="PDBsum" id="8I79"/>
<dbReference type="PDBsum" id="8K8T"/>
<dbReference type="PDBsum" id="8K9I"/>
<dbReference type="PDBsum" id="8KHP"/>
<dbReference type="PDBsum" id="8U80"/>
<dbReference type="PDBsum" id="8U81"/>
<dbReference type="PDBsum" id="8U82"/>
<dbReference type="PDBsum" id="8U83"/>
<dbReference type="PDBsum" id="8U84"/>
<dbReference type="EMDB" id="EMD-3317"/>
<dbReference type="EMDB" id="EMD-34199"/>
<dbReference type="EMDB" id="EMD-34449"/>
<dbReference type="EMDB" id="EMD-34450"/>
<dbReference type="EMDB" id="EMD-34451"/>
<dbReference type="EMDB" id="EMD-34452"/>
<dbReference type="EMDB" id="EMD-34453"/>
<dbReference type="EMDB" id="EMD-34455"/>
<dbReference type="EMDB" id="EMD-34462"/>
<dbReference type="EMDB" id="EMD-34467"/>
<dbReference type="EMDB" id="EMD-34473"/>
<dbReference type="EMDB" id="EMD-34474"/>
<dbReference type="EMDB" id="EMD-35212"/>
<dbReference type="EMDB" id="EMD-36961"/>
<dbReference type="EMDB" id="EMD-36987"/>
<dbReference type="EMDB" id="EMD-37247"/>
<dbReference type="EMDB" id="EMD-41994"/>
<dbReference type="EMDB" id="EMD-41996"/>
<dbReference type="EMDB" id="EMD-41997"/>
<dbReference type="EMDB" id="EMD-42000"/>
<dbReference type="EMDB" id="EMD-42001"/>
<dbReference type="EMDB" id="EMD-42004"/>
<dbReference type="EMDB" id="EMD-42008"/>
<dbReference type="SMR" id="Q13618"/>
<dbReference type="BioGRID" id="114030">
    <property type="interactions" value="3176"/>
</dbReference>
<dbReference type="ComplexPortal" id="CPX-2300">
    <property type="entry name" value="CRL3 E3 ubiquitin ligase complex, SPOP variant"/>
</dbReference>
<dbReference type="ComplexPortal" id="CPX-8007">
    <property type="entry name" value="CRL3 E3 ubiquitin ligase complex, KLHL1 variant"/>
</dbReference>
<dbReference type="ComplexPortal" id="CPX-8025">
    <property type="entry name" value="CRL3 E3 ubiquitin ligase complex, KLHL2 variant"/>
</dbReference>
<dbReference type="ComplexPortal" id="CPX-8041">
    <property type="entry name" value="CRL3 E3 ubiquitin ligase complex, KLHL3 variant"/>
</dbReference>
<dbReference type="ComplexPortal" id="CPX-8061">
    <property type="entry name" value="CRL3 E3 ubiquitin ligase complex, KLHL4 variant"/>
</dbReference>
<dbReference type="ComplexPortal" id="CPX-8063">
    <property type="entry name" value="CRL3 E3 ubiquitin ligase complex, KLHL5 variant"/>
</dbReference>
<dbReference type="ComplexPortal" id="CPX-8064">
    <property type="entry name" value="CRL3 E3 ubiquitin ligase complex, KLHL6 variant"/>
</dbReference>
<dbReference type="ComplexPortal" id="CPX-8083">
    <property type="entry name" value="CRL3 E3 ubiquitin ligase complex, KLHL9 variant"/>
</dbReference>
<dbReference type="ComplexPortal" id="CPX-8084">
    <property type="entry name" value="CRL3 E3 ubiquitin ligase complex, KLHL7 variant"/>
</dbReference>
<dbReference type="ComplexPortal" id="CPX-8085">
    <property type="entry name" value="CRL3 E3 ubiquitin ligase complex, KLHL8 variant"/>
</dbReference>
<dbReference type="ComplexPortal" id="CPX-8087">
    <property type="entry name" value="CRL3 E3 ubiquitin ligase complex, KLHL10 variant"/>
</dbReference>
<dbReference type="ComplexPortal" id="CPX-8088">
    <property type="entry name" value="CRL3 E3 ubiquitin ligase complex, KLHL11 variant"/>
</dbReference>
<dbReference type="ComplexPortal" id="CPX-8089">
    <property type="entry name" value="CRL3 E3 ubiquitin ligase complex, KLHL12 variant"/>
</dbReference>
<dbReference type="ComplexPortal" id="CPX-8090">
    <property type="entry name" value="CRL3 E3 ubiquitin ligase complex, KLHL13 variant"/>
</dbReference>
<dbReference type="ComplexPortal" id="CPX-8091">
    <property type="entry name" value="CRL3 E3 ubiquitin ligase complex, KLHL14 variant"/>
</dbReference>
<dbReference type="ComplexPortal" id="CPX-8097">
    <property type="entry name" value="CRL3 E3 ubiquitin ligase complex, KLHL15 variant"/>
</dbReference>
<dbReference type="ComplexPortal" id="CPX-8102">
    <property type="entry name" value="CRL3 E3 ubiquitin ligase complex, KLHL16 variant"/>
</dbReference>
<dbReference type="ComplexPortal" id="CPX-8103">
    <property type="entry name" value="CRL3 E3 ubiquitin ligase complex, KLHL17 variant"/>
</dbReference>
<dbReference type="ComplexPortal" id="CPX-8106">
    <property type="entry name" value="CRL3 E3 ubiquitin ligase complex, KLHL18 variant"/>
</dbReference>
<dbReference type="ComplexPortal" id="CPX-8107">
    <property type="entry name" value="CRL3 E3 ubiquitin ligase complex, KEAP1 variant"/>
</dbReference>
<dbReference type="ComplexPortal" id="CPX-8109">
    <property type="entry name" value="CRL3 E3 ubiquitin ligase complex, KLHL20 variant"/>
</dbReference>
<dbReference type="ComplexPortal" id="CPX-8110">
    <property type="entry name" value="CRL3 E3 ubiquitin ligase complex, KLHL21 variant"/>
</dbReference>
<dbReference type="ComplexPortal" id="CPX-8122">
    <property type="entry name" value="CRL3 E3 ubiquitin ligase complex, KLHL22 variant"/>
</dbReference>
<dbReference type="ComplexPortal" id="CPX-8123">
    <property type="entry name" value="CRL3 E3 ubiquitin ligase complex, KLHL23 variant"/>
</dbReference>
<dbReference type="ComplexPortal" id="CPX-8125">
    <property type="entry name" value="CRL3 E3 ubiquitin ligase complex, KLHL24 variant"/>
</dbReference>
<dbReference type="ComplexPortal" id="CPX-8126">
    <property type="entry name" value="CRL3 E3 ubiquitin ligase complex, KLHL25 variant"/>
</dbReference>
<dbReference type="ComplexPortal" id="CPX-8130">
    <property type="entry name" value="CRL3 E3 ubiquitin ligase complex, KLHL26 variant"/>
</dbReference>
<dbReference type="ComplexPortal" id="CPX-8131">
    <property type="entry name" value="CRL3 E3 ubiquitin ligase complex, IPP variant"/>
</dbReference>
<dbReference type="ComplexPortal" id="CPX-8135">
    <property type="entry name" value="CRL3 E3 ubiquitin ligase complex, KLHL28 variant"/>
</dbReference>
<dbReference type="ComplexPortal" id="CPX-8147">
    <property type="entry name" value="CRL3 E3 ubiquitin ligase complex, KLHL29 variant"/>
</dbReference>
<dbReference type="ComplexPortal" id="CPX-8150">
    <property type="entry name" value="CRL3 E3 ubiquitin ligase complex, KLHL30 variant"/>
</dbReference>
<dbReference type="ComplexPortal" id="CPX-8151">
    <property type="entry name" value="CRL3 E3 ubiquitin ligase complex, KLHL31 variant"/>
</dbReference>
<dbReference type="ComplexPortal" id="CPX-8201">
    <property type="entry name" value="CRL3 E3 ubiquitin ligase complex, KLHL32 variant"/>
</dbReference>
<dbReference type="ComplexPortal" id="CPX-8202">
    <property type="entry name" value="CRL3 E3 ubiquitin ligase complex, KLHL34 variant"/>
</dbReference>
<dbReference type="ComplexPortal" id="CPX-8221">
    <property type="entry name" value="CRL3 E3 ubiquitin ligase complex, KLHL35 variant"/>
</dbReference>
<dbReference type="ComplexPortal" id="CPX-8222">
    <property type="entry name" value="CRL3 E3 ubiquitin ligase complex, KLHL36 variant"/>
</dbReference>
<dbReference type="ComplexPortal" id="CPX-8241">
    <property type="entry name" value="CRL3 E3 ubiquitin ligase complex, ENC1 variant"/>
</dbReference>
<dbReference type="ComplexPortal" id="CPX-8242">
    <property type="entry name" value="CRL3 E3 ubiquitin ligase complex, KLHL38 variant"/>
</dbReference>
<dbReference type="ComplexPortal" id="CPX-8261">
    <property type="entry name" value="CRL3 E3 ubiquitin ligase complex, KLHL40 variant"/>
</dbReference>
<dbReference type="ComplexPortal" id="CPX-8262">
    <property type="entry name" value="CRL3 E3 ubiquitin ligase complex, KLHL41 variant"/>
</dbReference>
<dbReference type="ComplexPortal" id="CPX-8263">
    <property type="entry name" value="CRL3 E3 ubiquitin ligase complex, KLHL42 variant"/>
</dbReference>
<dbReference type="ComplexPortal" id="CPX-8916">
    <property type="entry name" value="CRL3 E3 ubiquitin ligase complex, SPOP-SPOPL variant"/>
</dbReference>
<dbReference type="ComplexPortal" id="CPX-8917">
    <property type="entry name" value="CRL3 E3 ubiquitin ligase complex, SPOPL variant"/>
</dbReference>
<dbReference type="ComplexPortal" id="CPX-8918">
    <property type="entry name" value="CRL3 E3 ubiquitin ligase complex, KBTBD2 variant"/>
</dbReference>
<dbReference type="ComplexPortal" id="CPX-8927">
    <property type="entry name" value="CRL3 E3 ubiquitin ligase complex, KBTBD4 variant"/>
</dbReference>
<dbReference type="ComplexPortal" id="CPX-8935">
    <property type="entry name" value="CRL3 E3 ubiquitin ligase complex, KBTBD6-KBTBD7 variant"/>
</dbReference>
<dbReference type="ComplexPortal" id="CPX-8941">
    <property type="entry name" value="CRL3 E3 ubiquitin ligase complex, KBTBD8 variant"/>
</dbReference>
<dbReference type="ComplexPortal" id="CPX-8942">
    <property type="entry name" value="CRL3 E3 ubiquitin ligase complex, KBTBD3 variant"/>
</dbReference>
<dbReference type="ComplexPortal" id="CPX-9081">
    <property type="entry name" value="CRL3 E3 ubiquitin ligase complex, KBTBD13 variant"/>
</dbReference>
<dbReference type="CORUM" id="Q13618"/>
<dbReference type="DIP" id="DIP-31611N"/>
<dbReference type="FunCoup" id="Q13618">
    <property type="interactions" value="3672"/>
</dbReference>
<dbReference type="IntAct" id="Q13618">
    <property type="interactions" value="1118"/>
</dbReference>
<dbReference type="MINT" id="Q13618"/>
<dbReference type="STRING" id="9606.ENSP00000264414"/>
<dbReference type="GlyGen" id="Q13618">
    <property type="glycosylation" value="2 sites, 1 N-linked glycan (1 site), 1 O-linked glycan (1 site)"/>
</dbReference>
<dbReference type="iPTMnet" id="Q13618"/>
<dbReference type="PhosphoSitePlus" id="Q13618"/>
<dbReference type="SwissPalm" id="Q13618"/>
<dbReference type="BioMuta" id="CUL3"/>
<dbReference type="DMDM" id="12643396"/>
<dbReference type="jPOST" id="Q13618"/>
<dbReference type="MassIVE" id="Q13618"/>
<dbReference type="PaxDb" id="9606-ENSP00000264414"/>
<dbReference type="PeptideAtlas" id="Q13618"/>
<dbReference type="ProteomicsDB" id="59606">
    <molecule id="Q13618-1"/>
</dbReference>
<dbReference type="ProteomicsDB" id="59607">
    <molecule id="Q13618-2"/>
</dbReference>
<dbReference type="ProteomicsDB" id="59608">
    <molecule id="Q13618-3"/>
</dbReference>
<dbReference type="Pumba" id="Q13618"/>
<dbReference type="Antibodypedia" id="3632">
    <property type="antibodies" value="405 antibodies from 40 providers"/>
</dbReference>
<dbReference type="DNASU" id="8452"/>
<dbReference type="Ensembl" id="ENST00000264414.9">
    <molecule id="Q13618-1"/>
    <property type="protein sequence ID" value="ENSP00000264414.4"/>
    <property type="gene ID" value="ENSG00000036257.14"/>
</dbReference>
<dbReference type="Ensembl" id="ENST00000344951.8">
    <molecule id="Q13618-3"/>
    <property type="protein sequence ID" value="ENSP00000343601.4"/>
    <property type="gene ID" value="ENSG00000036257.14"/>
</dbReference>
<dbReference type="Ensembl" id="ENST00000409096.5">
    <molecule id="Q13618-2"/>
    <property type="protein sequence ID" value="ENSP00000387200.1"/>
    <property type="gene ID" value="ENSG00000036257.14"/>
</dbReference>
<dbReference type="Ensembl" id="ENST00000409777.5">
    <molecule id="Q13618-2"/>
    <property type="protein sequence ID" value="ENSP00000386525.1"/>
    <property type="gene ID" value="ENSG00000036257.14"/>
</dbReference>
<dbReference type="GeneID" id="8452"/>
<dbReference type="KEGG" id="hsa:8452"/>
<dbReference type="MANE-Select" id="ENST00000264414.9">
    <property type="protein sequence ID" value="ENSP00000264414.4"/>
    <property type="RefSeq nucleotide sequence ID" value="NM_003590.5"/>
    <property type="RefSeq protein sequence ID" value="NP_003581.1"/>
</dbReference>
<dbReference type="UCSC" id="uc002vny.4">
    <molecule id="Q13618-1"/>
    <property type="organism name" value="human"/>
</dbReference>
<dbReference type="AGR" id="HGNC:2553"/>
<dbReference type="CTD" id="8452"/>
<dbReference type="DisGeNET" id="8452"/>
<dbReference type="GeneCards" id="CUL3"/>
<dbReference type="GeneReviews" id="CUL3"/>
<dbReference type="HGNC" id="HGNC:2553">
    <property type="gene designation" value="CUL3"/>
</dbReference>
<dbReference type="HPA" id="ENSG00000036257">
    <property type="expression patterns" value="Tissue enhanced (testis)"/>
</dbReference>
<dbReference type="MalaCards" id="CUL3"/>
<dbReference type="MIM" id="603136">
    <property type="type" value="gene"/>
</dbReference>
<dbReference type="MIM" id="614496">
    <property type="type" value="phenotype"/>
</dbReference>
<dbReference type="MIM" id="619239">
    <property type="type" value="phenotype"/>
</dbReference>
<dbReference type="neXtProt" id="NX_Q13618"/>
<dbReference type="OpenTargets" id="ENSG00000036257"/>
<dbReference type="Orphanet" id="528084">
    <property type="disease" value="Non-specific syndromic intellectual disability"/>
</dbReference>
<dbReference type="Orphanet" id="300530">
    <property type="disease" value="Pseudohypoaldosteronism type 2E"/>
</dbReference>
<dbReference type="PharmGKB" id="PA27049"/>
<dbReference type="VEuPathDB" id="HostDB:ENSG00000036257"/>
<dbReference type="eggNOG" id="KOG2166">
    <property type="taxonomic scope" value="Eukaryota"/>
</dbReference>
<dbReference type="GeneTree" id="ENSGT00940000155066"/>
<dbReference type="HOGENOM" id="CLU_004747_7_1_1"/>
<dbReference type="InParanoid" id="Q13618"/>
<dbReference type="OMA" id="MFKDMTI"/>
<dbReference type="OrthoDB" id="27073at2759"/>
<dbReference type="PAN-GO" id="Q13618">
    <property type="GO annotations" value="3 GO annotations based on evolutionary models"/>
</dbReference>
<dbReference type="PhylomeDB" id="Q13618"/>
<dbReference type="TreeFam" id="TF105858"/>
<dbReference type="PathwayCommons" id="Q13618"/>
<dbReference type="Reactome" id="R-HSA-4641258">
    <property type="pathway name" value="Degradation of DVL"/>
</dbReference>
<dbReference type="Reactome" id="R-HSA-5632684">
    <property type="pathway name" value="Hedgehog 'on' state"/>
</dbReference>
<dbReference type="Reactome" id="R-HSA-5658442">
    <property type="pathway name" value="Regulation of RAS by GAPs"/>
</dbReference>
<dbReference type="Reactome" id="R-HSA-8951664">
    <property type="pathway name" value="Neddylation"/>
</dbReference>
<dbReference type="Reactome" id="R-HSA-9013418">
    <property type="pathway name" value="RHOBTB2 GTPase cycle"/>
</dbReference>
<dbReference type="Reactome" id="R-HSA-9013422">
    <property type="pathway name" value="RHOBTB1 GTPase cycle"/>
</dbReference>
<dbReference type="Reactome" id="R-HSA-9679191">
    <property type="pathway name" value="Potential therapeutics for SARS"/>
</dbReference>
<dbReference type="Reactome" id="R-HSA-9706019">
    <property type="pathway name" value="RHOBTB3 ATPase cycle"/>
</dbReference>
<dbReference type="Reactome" id="R-HSA-9755511">
    <property type="pathway name" value="KEAP1-NFE2L2 pathway"/>
</dbReference>
<dbReference type="Reactome" id="R-HSA-983168">
    <property type="pathway name" value="Antigen processing: Ubiquitination &amp; Proteasome degradation"/>
</dbReference>
<dbReference type="SignaLink" id="Q13618"/>
<dbReference type="SIGNOR" id="Q13618"/>
<dbReference type="UniPathway" id="UPA00143"/>
<dbReference type="BioGRID-ORCS" id="8452">
    <property type="hits" value="550 hits in 1242 CRISPR screens"/>
</dbReference>
<dbReference type="CD-CODE" id="804901D1">
    <property type="entry name" value="Nuclear speckle"/>
</dbReference>
<dbReference type="CD-CODE" id="91857CE7">
    <property type="entry name" value="Nucleolus"/>
</dbReference>
<dbReference type="ChiTaRS" id="CUL3">
    <property type="organism name" value="human"/>
</dbReference>
<dbReference type="EvolutionaryTrace" id="Q13618"/>
<dbReference type="GeneWiki" id="CUL3"/>
<dbReference type="GenomeRNAi" id="8452"/>
<dbReference type="Pharos" id="Q13618">
    <property type="development level" value="Tbio"/>
</dbReference>
<dbReference type="PRO" id="PR:Q13618"/>
<dbReference type="Proteomes" id="UP000005640">
    <property type="component" value="Chromosome 2"/>
</dbReference>
<dbReference type="RNAct" id="Q13618">
    <property type="molecule type" value="protein"/>
</dbReference>
<dbReference type="Bgee" id="ENSG00000036257">
    <property type="expression patterns" value="Expressed in sperm and 205 other cell types or tissues"/>
</dbReference>
<dbReference type="ExpressionAtlas" id="Q13618">
    <property type="expression patterns" value="baseline and differential"/>
</dbReference>
<dbReference type="GO" id="GO:0005813">
    <property type="term" value="C:centrosome"/>
    <property type="evidence" value="ECO:0000314"/>
    <property type="project" value="UniProtKB"/>
</dbReference>
<dbReference type="GO" id="GO:0031463">
    <property type="term" value="C:Cul3-RING ubiquitin ligase complex"/>
    <property type="evidence" value="ECO:0000314"/>
    <property type="project" value="UniProtKB"/>
</dbReference>
<dbReference type="GO" id="GO:0005737">
    <property type="term" value="C:cytoplasm"/>
    <property type="evidence" value="ECO:0000314"/>
    <property type="project" value="UniProtKB"/>
</dbReference>
<dbReference type="GO" id="GO:0005829">
    <property type="term" value="C:cytosol"/>
    <property type="evidence" value="ECO:0000304"/>
    <property type="project" value="Reactome"/>
</dbReference>
<dbReference type="GO" id="GO:0070062">
    <property type="term" value="C:extracellular exosome"/>
    <property type="evidence" value="ECO:0007005"/>
    <property type="project" value="UniProtKB"/>
</dbReference>
<dbReference type="GO" id="GO:0098978">
    <property type="term" value="C:glutamatergic synapse"/>
    <property type="evidence" value="ECO:0007669"/>
    <property type="project" value="Ensembl"/>
</dbReference>
<dbReference type="GO" id="GO:0005794">
    <property type="term" value="C:Golgi apparatus"/>
    <property type="evidence" value="ECO:0007669"/>
    <property type="project" value="UniProtKB-SubCell"/>
</dbReference>
<dbReference type="GO" id="GO:0016020">
    <property type="term" value="C:membrane"/>
    <property type="evidence" value="ECO:0007005"/>
    <property type="project" value="UniProtKB"/>
</dbReference>
<dbReference type="GO" id="GO:0072686">
    <property type="term" value="C:mitotic spindle"/>
    <property type="evidence" value="ECO:0000314"/>
    <property type="project" value="UniProtKB"/>
</dbReference>
<dbReference type="GO" id="GO:0005654">
    <property type="term" value="C:nucleoplasm"/>
    <property type="evidence" value="ECO:0000304"/>
    <property type="project" value="Reactome"/>
</dbReference>
<dbReference type="GO" id="GO:0005634">
    <property type="term" value="C:nucleus"/>
    <property type="evidence" value="ECO:0000314"/>
    <property type="project" value="UniProtKB"/>
</dbReference>
<dbReference type="GO" id="GO:0005886">
    <property type="term" value="C:plasma membrane"/>
    <property type="evidence" value="ECO:0000314"/>
    <property type="project" value="UniProtKB"/>
</dbReference>
<dbReference type="GO" id="GO:0005827">
    <property type="term" value="C:polar microtubule"/>
    <property type="evidence" value="ECO:0000314"/>
    <property type="project" value="UniProtKB"/>
</dbReference>
<dbReference type="GO" id="GO:0098794">
    <property type="term" value="C:postsynapse"/>
    <property type="evidence" value="ECO:0007669"/>
    <property type="project" value="GOC"/>
</dbReference>
<dbReference type="GO" id="GO:0036126">
    <property type="term" value="C:sperm flagellum"/>
    <property type="evidence" value="ECO:0000314"/>
    <property type="project" value="UniProtKB"/>
</dbReference>
<dbReference type="GO" id="GO:0000922">
    <property type="term" value="C:spindle pole"/>
    <property type="evidence" value="ECO:0000314"/>
    <property type="project" value="UniProtKB"/>
</dbReference>
<dbReference type="GO" id="GO:0030332">
    <property type="term" value="F:cyclin binding"/>
    <property type="evidence" value="ECO:0007669"/>
    <property type="project" value="Ensembl"/>
</dbReference>
<dbReference type="GO" id="GO:0042802">
    <property type="term" value="F:identical protein binding"/>
    <property type="evidence" value="ECO:0007669"/>
    <property type="project" value="Ensembl"/>
</dbReference>
<dbReference type="GO" id="GO:0005112">
    <property type="term" value="F:Notch binding"/>
    <property type="evidence" value="ECO:0000353"/>
    <property type="project" value="MGI"/>
</dbReference>
<dbReference type="GO" id="GO:0031208">
    <property type="term" value="F:POZ domain binding"/>
    <property type="evidence" value="ECO:0000314"/>
    <property type="project" value="UniProtKB"/>
</dbReference>
<dbReference type="GO" id="GO:0160072">
    <property type="term" value="F:ubiquitin ligase complex scaffold activity"/>
    <property type="evidence" value="ECO:0000314"/>
    <property type="project" value="UniProt"/>
</dbReference>
<dbReference type="GO" id="GO:0061630">
    <property type="term" value="F:ubiquitin protein ligase activity"/>
    <property type="evidence" value="ECO:0000314"/>
    <property type="project" value="UniProtKB"/>
</dbReference>
<dbReference type="GO" id="GO:0031625">
    <property type="term" value="F:ubiquitin protein ligase binding"/>
    <property type="evidence" value="ECO:0000353"/>
    <property type="project" value="UniProtKB"/>
</dbReference>
<dbReference type="GO" id="GO:0031145">
    <property type="term" value="P:anaphase-promoting complex-dependent catabolic process"/>
    <property type="evidence" value="ECO:0000314"/>
    <property type="project" value="MGI"/>
</dbReference>
<dbReference type="GO" id="GO:0016477">
    <property type="term" value="P:cell migration"/>
    <property type="evidence" value="ECO:0000315"/>
    <property type="project" value="UniProtKB"/>
</dbReference>
<dbReference type="GO" id="GO:0030030">
    <property type="term" value="P:cell projection organization"/>
    <property type="evidence" value="ECO:0007669"/>
    <property type="project" value="UniProtKB-KW"/>
</dbReference>
<dbReference type="GO" id="GO:0071230">
    <property type="term" value="P:cellular response to amino acid stimulus"/>
    <property type="evidence" value="ECO:0000314"/>
    <property type="project" value="UniProt"/>
</dbReference>
<dbReference type="GO" id="GO:0034599">
    <property type="term" value="P:cellular response to oxidative stress"/>
    <property type="evidence" value="ECO:0000314"/>
    <property type="project" value="UniProt"/>
</dbReference>
<dbReference type="GO" id="GO:0048208">
    <property type="term" value="P:COPII vesicle coating"/>
    <property type="evidence" value="ECO:0000315"/>
    <property type="project" value="UniProtKB"/>
</dbReference>
<dbReference type="GO" id="GO:0040016">
    <property type="term" value="P:embryonic cleavage"/>
    <property type="evidence" value="ECO:0000250"/>
    <property type="project" value="UniProtKB"/>
</dbReference>
<dbReference type="GO" id="GO:0006888">
    <property type="term" value="P:endoplasmic reticulum to Golgi vesicle-mediated transport"/>
    <property type="evidence" value="ECO:0000314"/>
    <property type="project" value="UniProtKB"/>
</dbReference>
<dbReference type="GO" id="GO:0044346">
    <property type="term" value="P:fibroblast apoptotic process"/>
    <property type="evidence" value="ECO:0007669"/>
    <property type="project" value="Ensembl"/>
</dbReference>
<dbReference type="GO" id="GO:0000082">
    <property type="term" value="P:G1/S transition of mitotic cell cycle"/>
    <property type="evidence" value="ECO:0000304"/>
    <property type="project" value="ProtInc"/>
</dbReference>
<dbReference type="GO" id="GO:0007369">
    <property type="term" value="P:gastrulation"/>
    <property type="evidence" value="ECO:0007669"/>
    <property type="project" value="Ensembl"/>
</dbReference>
<dbReference type="GO" id="GO:0010467">
    <property type="term" value="P:gene expression"/>
    <property type="evidence" value="ECO:0007669"/>
    <property type="project" value="Ensembl"/>
</dbReference>
<dbReference type="GO" id="GO:0006954">
    <property type="term" value="P:inflammatory response"/>
    <property type="evidence" value="ECO:0007669"/>
    <property type="project" value="Ensembl"/>
</dbReference>
<dbReference type="GO" id="GO:0007229">
    <property type="term" value="P:integrin-mediated signaling pathway"/>
    <property type="evidence" value="ECO:0000250"/>
    <property type="project" value="UniProtKB"/>
</dbReference>
<dbReference type="GO" id="GO:0097193">
    <property type="term" value="P:intrinsic apoptotic signaling pathway"/>
    <property type="evidence" value="ECO:0000304"/>
    <property type="project" value="ProtInc"/>
</dbReference>
<dbReference type="GO" id="GO:0001822">
    <property type="term" value="P:kidney development"/>
    <property type="evidence" value="ECO:0007669"/>
    <property type="project" value="Ensembl"/>
</dbReference>
<dbReference type="GO" id="GO:0072576">
    <property type="term" value="P:liver morphogenesis"/>
    <property type="evidence" value="ECO:0007669"/>
    <property type="project" value="Ensembl"/>
</dbReference>
<dbReference type="GO" id="GO:0007080">
    <property type="term" value="P:mitotic metaphase chromosome alignment"/>
    <property type="evidence" value="ECO:0000315"/>
    <property type="project" value="UniProtKB"/>
</dbReference>
<dbReference type="GO" id="GO:0035024">
    <property type="term" value="P:negative regulation of Rho protein signal transduction"/>
    <property type="evidence" value="ECO:0000315"/>
    <property type="project" value="UniProtKB"/>
</dbReference>
<dbReference type="GO" id="GO:0000122">
    <property type="term" value="P:negative regulation of transcription by RNA polymerase II"/>
    <property type="evidence" value="ECO:0007669"/>
    <property type="project" value="Ensembl"/>
</dbReference>
<dbReference type="GO" id="GO:0032480">
    <property type="term" value="P:negative regulation of type I interferon production"/>
    <property type="evidence" value="ECO:0000314"/>
    <property type="project" value="UniProt"/>
</dbReference>
<dbReference type="GO" id="GO:0071630">
    <property type="term" value="P:nuclear protein quality control by the ubiquitin-proteasome system"/>
    <property type="evidence" value="ECO:0000314"/>
    <property type="project" value="UniProtKB"/>
</dbReference>
<dbReference type="GO" id="GO:0008284">
    <property type="term" value="P:positive regulation of cell population proliferation"/>
    <property type="evidence" value="ECO:0000304"/>
    <property type="project" value="ProtInc"/>
</dbReference>
<dbReference type="GO" id="GO:0032467">
    <property type="term" value="P:positive regulation of cytokinesis"/>
    <property type="evidence" value="ECO:0000315"/>
    <property type="project" value="UniProtKB"/>
</dbReference>
<dbReference type="GO" id="GO:1901992">
    <property type="term" value="P:positive regulation of mitotic cell cycle phase transition"/>
    <property type="evidence" value="ECO:0000315"/>
    <property type="project" value="UniProtKB"/>
</dbReference>
<dbReference type="GO" id="GO:0045842">
    <property type="term" value="P:positive regulation of mitotic metaphase/anaphase transition"/>
    <property type="evidence" value="ECO:0000315"/>
    <property type="project" value="UniProtKB"/>
</dbReference>
<dbReference type="GO" id="GO:0031398">
    <property type="term" value="P:positive regulation of protein ubiquitination"/>
    <property type="evidence" value="ECO:0000316"/>
    <property type="project" value="BHF-UCL"/>
</dbReference>
<dbReference type="GO" id="GO:1904263">
    <property type="term" value="P:positive regulation of TORC1 signaling"/>
    <property type="evidence" value="ECO:0000314"/>
    <property type="project" value="UniProt"/>
</dbReference>
<dbReference type="GO" id="GO:0043161">
    <property type="term" value="P:proteasome-mediated ubiquitin-dependent protein catabolic process"/>
    <property type="evidence" value="ECO:0000314"/>
    <property type="project" value="UniProtKB"/>
</dbReference>
<dbReference type="GO" id="GO:0051865">
    <property type="term" value="P:protein autoubiquitination"/>
    <property type="evidence" value="ECO:0000314"/>
    <property type="project" value="UniProtKB"/>
</dbReference>
<dbReference type="GO" id="GO:0031648">
    <property type="term" value="P:protein destabilization"/>
    <property type="evidence" value="ECO:0000316"/>
    <property type="project" value="BHF-UCL"/>
</dbReference>
<dbReference type="GO" id="GO:0070936">
    <property type="term" value="P:protein K48-linked ubiquitination"/>
    <property type="evidence" value="ECO:0000314"/>
    <property type="project" value="UniProtKB"/>
</dbReference>
<dbReference type="GO" id="GO:0006513">
    <property type="term" value="P:protein monoubiquitination"/>
    <property type="evidence" value="ECO:0000314"/>
    <property type="project" value="UniProtKB"/>
</dbReference>
<dbReference type="GO" id="GO:0000209">
    <property type="term" value="P:protein polyubiquitination"/>
    <property type="evidence" value="ECO:0000314"/>
    <property type="project" value="UniProtKB"/>
</dbReference>
<dbReference type="GO" id="GO:0016567">
    <property type="term" value="P:protein ubiquitination"/>
    <property type="evidence" value="ECO:0000314"/>
    <property type="project" value="UniProtKB"/>
</dbReference>
<dbReference type="GO" id="GO:1900076">
    <property type="term" value="P:regulation of cellular response to insulin stimulus"/>
    <property type="evidence" value="ECO:0000314"/>
    <property type="project" value="UniProt"/>
</dbReference>
<dbReference type="GO" id="GO:0140252">
    <property type="term" value="P:regulation protein catabolic process at postsynapse"/>
    <property type="evidence" value="ECO:0007669"/>
    <property type="project" value="Ensembl"/>
</dbReference>
<dbReference type="GO" id="GO:0017145">
    <property type="term" value="P:stem cell division"/>
    <property type="evidence" value="ECO:0000250"/>
    <property type="project" value="UniProtKB"/>
</dbReference>
<dbReference type="GO" id="GO:0043149">
    <property type="term" value="P:stress fiber assembly"/>
    <property type="evidence" value="ECO:0000315"/>
    <property type="project" value="UniProtKB"/>
</dbReference>
<dbReference type="GO" id="GO:0001831">
    <property type="term" value="P:trophectodermal cellular morphogenesis"/>
    <property type="evidence" value="ECO:0007669"/>
    <property type="project" value="Ensembl"/>
</dbReference>
<dbReference type="GO" id="GO:0006511">
    <property type="term" value="P:ubiquitin-dependent protein catabolic process"/>
    <property type="evidence" value="ECO:0000314"/>
    <property type="project" value="UniProtKB"/>
</dbReference>
<dbReference type="GO" id="GO:0016055">
    <property type="term" value="P:Wnt signaling pathway"/>
    <property type="evidence" value="ECO:0007669"/>
    <property type="project" value="Ensembl"/>
</dbReference>
<dbReference type="FunFam" id="1.10.10.10:FF:000091">
    <property type="entry name" value="Cullin 3"/>
    <property type="match status" value="1"/>
</dbReference>
<dbReference type="FunFam" id="1.20.1310.10:FF:000001">
    <property type="entry name" value="Cullin 3"/>
    <property type="match status" value="1"/>
</dbReference>
<dbReference type="FunFam" id="1.20.1310.10:FF:000005">
    <property type="entry name" value="Cullin 3"/>
    <property type="match status" value="1"/>
</dbReference>
<dbReference type="FunFam" id="1.20.1310.10:FF:000006">
    <property type="entry name" value="Cullin 3"/>
    <property type="match status" value="1"/>
</dbReference>
<dbReference type="FunFam" id="1.20.1310.10:FF:000002">
    <property type="entry name" value="cullin-3 isoform X1"/>
    <property type="match status" value="1"/>
</dbReference>
<dbReference type="FunFam" id="3.30.230.130:FF:000002">
    <property type="entry name" value="cullin-3 isoform X1"/>
    <property type="match status" value="1"/>
</dbReference>
<dbReference type="Gene3D" id="1.20.1310.10">
    <property type="entry name" value="Cullin Repeats"/>
    <property type="match status" value="4"/>
</dbReference>
<dbReference type="Gene3D" id="3.30.230.130">
    <property type="entry name" value="Cullin, Chain C, Domain 2"/>
    <property type="match status" value="1"/>
</dbReference>
<dbReference type="Gene3D" id="1.10.10.10">
    <property type="entry name" value="Winged helix-like DNA-binding domain superfamily/Winged helix DNA-binding domain"/>
    <property type="match status" value="1"/>
</dbReference>
<dbReference type="InterPro" id="IPR045093">
    <property type="entry name" value="Cullin"/>
</dbReference>
<dbReference type="InterPro" id="IPR016157">
    <property type="entry name" value="Cullin_CS"/>
</dbReference>
<dbReference type="InterPro" id="IPR016158">
    <property type="entry name" value="Cullin_homology"/>
</dbReference>
<dbReference type="InterPro" id="IPR036317">
    <property type="entry name" value="Cullin_homology_sf"/>
</dbReference>
<dbReference type="InterPro" id="IPR001373">
    <property type="entry name" value="Cullin_N"/>
</dbReference>
<dbReference type="InterPro" id="IPR019559">
    <property type="entry name" value="Cullin_neddylation_domain"/>
</dbReference>
<dbReference type="InterPro" id="IPR016159">
    <property type="entry name" value="Cullin_repeat-like_dom_sf"/>
</dbReference>
<dbReference type="InterPro" id="IPR036388">
    <property type="entry name" value="WH-like_DNA-bd_sf"/>
</dbReference>
<dbReference type="InterPro" id="IPR036390">
    <property type="entry name" value="WH_DNA-bd_sf"/>
</dbReference>
<dbReference type="PANTHER" id="PTHR11932">
    <property type="entry name" value="CULLIN"/>
    <property type="match status" value="1"/>
</dbReference>
<dbReference type="Pfam" id="PF00888">
    <property type="entry name" value="Cullin"/>
    <property type="match status" value="1"/>
</dbReference>
<dbReference type="Pfam" id="PF10557">
    <property type="entry name" value="Cullin_Nedd8"/>
    <property type="match status" value="1"/>
</dbReference>
<dbReference type="SMART" id="SM00182">
    <property type="entry name" value="CULLIN"/>
    <property type="match status" value="1"/>
</dbReference>
<dbReference type="SMART" id="SM00884">
    <property type="entry name" value="Cullin_Nedd8"/>
    <property type="match status" value="1"/>
</dbReference>
<dbReference type="SUPFAM" id="SSF75632">
    <property type="entry name" value="Cullin homology domain"/>
    <property type="match status" value="1"/>
</dbReference>
<dbReference type="SUPFAM" id="SSF74788">
    <property type="entry name" value="Cullin repeat-like"/>
    <property type="match status" value="1"/>
</dbReference>
<dbReference type="SUPFAM" id="SSF46785">
    <property type="entry name" value="Winged helix' DNA-binding domain"/>
    <property type="match status" value="1"/>
</dbReference>
<dbReference type="PROSITE" id="PS01256">
    <property type="entry name" value="CULLIN_1"/>
    <property type="match status" value="1"/>
</dbReference>
<dbReference type="PROSITE" id="PS50069">
    <property type="entry name" value="CULLIN_2"/>
    <property type="match status" value="1"/>
</dbReference>
<accession>Q13618</accession>
<accession>A8K536</accession>
<accession>B8ZZC3</accession>
<accession>O75415</accession>
<accession>Q569L3</accession>
<accession>Q9UBI8</accession>
<accession>Q9UET7</accession>
<sequence>MSNLSKGTGSRKDTKMRIRAFPMTMDEKYVNSIWDLLKNAIQEIQRKNNSGLSFEELYRNAYTMVLHKHGEKLYTGLREVVTEHLINKVREDVLNSLNNNFLQTLNQAWNDHQTAMVMIRDILMYMDRVYVQQNNVENVYNLGLIIFRDQVVRYGCIRDHLRQTLLDMIARERKGEVVDRGAIRNACQMLMILGLEGRSVYEEDFEAPFLEMSAEFFQMESQKFLAENSASVYIKKVEARINEEIERVMHCLDKSTEEPIVKVVERELISKHMKTIVEMENSGLVHMLKNGKTEDLGCMYKLFSRVPNGLKTMCECMSSYLREQGKALVSEEGEGKNPVDYIQGLLDLKSRFDRFLLESFNNDRLFKQTIAGDFEYFLNLNSRSPEYLSLFIDDKLKKGVKGLTEQEVETILDKAMVLFRFMQEKDVFERYYKQHLARRLLTNKSVSDDSEKNMISKLKTECGCQFTSKLEGMFRDMSISNTTMDEFRQHLQATGVSLGGVDLTVRVLTTGYWPTQSATPKCNIPPAPRHAFEIFRRFYLAKHSGRQLTLQHHMGSADLNATFYGPVKKEDGSEVGVGGAQVTGSNTRKHILQVSTFQMTILMLFNNREKYTFEEIQQETDIPERELVRALQSLACGKPTQRVLTKEPKSKEIENGHIFTVNDQFTSKLHRVKIQTVAAKQGESDPERKETRQKVDDDRKHEIEAAIVRIMKSRKKMQHNVLVAEVTQQLKARFLPSPVVIKKRIEGLIEREYLARTPEDRKVYTYVA</sequence>
<name>CUL3_HUMAN</name>
<protein>
    <recommendedName>
        <fullName evidence="71">Cullin-3</fullName>
        <shortName>CUL-3</shortName>
    </recommendedName>
</protein>
<keyword id="KW-0002">3D-structure</keyword>
<keyword id="KW-0007">Acetylation</keyword>
<keyword id="KW-0025">Alternative splicing</keyword>
<keyword id="KW-1268">Autism spectrum disorder</keyword>
<keyword id="KW-0131">Cell cycle</keyword>
<keyword id="KW-0132">Cell division</keyword>
<keyword id="KW-0966">Cell projection</keyword>
<keyword id="KW-0969">Cilium</keyword>
<keyword id="KW-0970">Cilium biogenesis/degradation</keyword>
<keyword id="KW-0963">Cytoplasm</keyword>
<keyword id="KW-0206">Cytoskeleton</keyword>
<keyword id="KW-0225">Disease variant</keyword>
<keyword id="KW-0887">Epilepsy</keyword>
<keyword id="KW-0931">ER-Golgi transport</keyword>
<keyword id="KW-0282">Flagellum</keyword>
<keyword id="KW-0333">Golgi apparatus</keyword>
<keyword id="KW-0991">Intellectual disability</keyword>
<keyword id="KW-1017">Isopeptide bond</keyword>
<keyword id="KW-0498">Mitosis</keyword>
<keyword id="KW-0539">Nucleus</keyword>
<keyword id="KW-0597">Phosphoprotein</keyword>
<keyword id="KW-1267">Proteomics identification</keyword>
<keyword id="KW-1185">Reference proteome</keyword>
<keyword id="KW-0813">Transport</keyword>
<keyword id="KW-0832">Ubl conjugation</keyword>
<keyword id="KW-0833">Ubl conjugation pathway</keyword>
<feature type="initiator methionine" description="Removed" evidence="73">
    <location>
        <position position="1"/>
    </location>
</feature>
<feature type="chain" id="PRO_0000119793" description="Cullin-3">
    <location>
        <begin position="2"/>
        <end position="768"/>
    </location>
</feature>
<feature type="domain" description="Cullin neddylation" evidence="3">
    <location>
        <begin position="698"/>
        <end position="760"/>
    </location>
</feature>
<feature type="region of interest" description="Interaction with KLHL18" evidence="34">
    <location>
        <begin position="2"/>
        <end position="41"/>
    </location>
</feature>
<feature type="region of interest" description="Disordered" evidence="5">
    <location>
        <begin position="677"/>
        <end position="698"/>
    </location>
</feature>
<feature type="compositionally biased region" description="Basic and acidic residues" evidence="5">
    <location>
        <begin position="682"/>
        <end position="698"/>
    </location>
</feature>
<feature type="modified residue" description="N-acetylserine" evidence="73">
    <location>
        <position position="2"/>
    </location>
</feature>
<feature type="modified residue" description="Phosphoserine" evidence="74">
    <location>
        <position position="585"/>
    </location>
</feature>
<feature type="cross-link" description="Glycyl lysine isopeptide (Lys-Gly) (interchain with G-Cter in NEDD8)" evidence="1">
    <location>
        <position position="712"/>
    </location>
</feature>
<feature type="splice variant" id="VSP_008824" description="In isoform 2." evidence="70">
    <location>
        <begin position="1"/>
        <end position="24"/>
    </location>
</feature>
<feature type="splice variant" id="VSP_008825" description="In isoform 3." evidence="71">
    <location>
        <begin position="23"/>
        <end position="88"/>
    </location>
</feature>
<feature type="sequence variant" id="VAR_017194" description="In dbSNP:rs2969802.">
    <original>D</original>
    <variation>H</variation>
    <location>
        <position position="13"/>
    </location>
</feature>
<feature type="sequence variant" id="VAR_048839" description="In dbSNP:rs17480168.">
    <original>R</original>
    <variation>S</variation>
    <location>
        <position position="184"/>
    </location>
</feature>
<feature type="sequence variant" id="VAR_085407" description="In NEDAUS; decreases interaction with KEAP1; dbSNP:rs1343840421." evidence="60">
    <original>V</original>
    <variation>A</variation>
    <location>
        <position position="285"/>
    </location>
</feature>
<feature type="sequence variant" id="VAR_067532" description="In PHA2E; dbSNP:rs199469656." evidence="27">
    <original>D</original>
    <variation>G</variation>
    <location>
        <position position="413"/>
    </location>
</feature>
<feature type="sequence variant" id="VAR_067533" description="In PHA2E; dbSNP:rs199469658." evidence="27">
    <original>K</original>
    <variation>R</variation>
    <location>
        <position position="459"/>
    </location>
</feature>
<feature type="sequence variant" id="VAR_017195" description="In dbSNP:rs3738952.">
    <original>V</original>
    <variation>I</variation>
    <location>
        <position position="567"/>
    </location>
</feature>
<feature type="sequence variant" id="VAR_085408" description="In NEDAUS." evidence="61">
    <location>
        <begin position="587"/>
        <end position="768"/>
    </location>
</feature>
<feature type="sequence variant" id="VAR_078688" description="Found in a patient with autism spectrum disorder; uncertain significance; dbSNP:rs763087632." evidence="48">
    <original>H</original>
    <variation>R</variation>
    <location>
        <position position="719"/>
    </location>
</feature>
<feature type="sequence conflict" description="In Ref. 3; AAC36682." evidence="71" ref="3">
    <original>D</original>
    <variation>G</variation>
    <location>
        <position position="13"/>
    </location>
</feature>
<feature type="sequence conflict" description="In Ref. 4; AAQ01660." evidence="71" ref="4">
    <original>K</original>
    <variation>T</variation>
    <location>
        <position position="397"/>
    </location>
</feature>
<feature type="sequence conflict" description="In Ref. 4; AAQ01660." evidence="71" ref="4">
    <original>N</original>
    <variation>T</variation>
    <location>
        <position position="481"/>
    </location>
</feature>
<feature type="sequence conflict" description="In Ref. 8; AAH31844." evidence="71" ref="8">
    <original>E</original>
    <variation>G</variation>
    <location>
        <position position="609"/>
    </location>
</feature>
<feature type="sequence conflict" description="In Ref. 4; AAQ01660." evidence="71" ref="4">
    <original>T</original>
    <variation>I</variation>
    <location>
        <position position="666"/>
    </location>
</feature>
<feature type="helix" evidence="75">
    <location>
        <begin position="26"/>
        <end position="45"/>
    </location>
</feature>
<feature type="helix" evidence="75">
    <location>
        <begin position="49"/>
        <end position="51"/>
    </location>
</feature>
<feature type="helix" evidence="75">
    <location>
        <begin position="54"/>
        <end position="66"/>
    </location>
</feature>
<feature type="helix" evidence="75">
    <location>
        <begin position="70"/>
        <end position="87"/>
    </location>
</feature>
<feature type="helix" evidence="75">
    <location>
        <begin position="89"/>
        <end position="94"/>
    </location>
</feature>
<feature type="strand" evidence="75">
    <location>
        <begin position="97"/>
        <end position="100"/>
    </location>
</feature>
<feature type="helix" evidence="75">
    <location>
        <begin position="101"/>
        <end position="122"/>
    </location>
</feature>
<feature type="helix" evidence="75">
    <location>
        <begin position="124"/>
        <end position="128"/>
    </location>
</feature>
<feature type="helix" evidence="75">
    <location>
        <begin position="130"/>
        <end position="133"/>
    </location>
</feature>
<feature type="helix" evidence="75">
    <location>
        <begin position="139"/>
        <end position="150"/>
    </location>
</feature>
<feature type="turn" evidence="75">
    <location>
        <begin position="151"/>
        <end position="153"/>
    </location>
</feature>
<feature type="helix" evidence="75">
    <location>
        <begin position="155"/>
        <end position="174"/>
    </location>
</feature>
<feature type="helix" evidence="75">
    <location>
        <begin position="180"/>
        <end position="192"/>
    </location>
</feature>
<feature type="strand" evidence="75">
    <location>
        <begin position="195"/>
        <end position="198"/>
    </location>
</feature>
<feature type="helix" evidence="75">
    <location>
        <begin position="199"/>
        <end position="204"/>
    </location>
</feature>
<feature type="helix" evidence="75">
    <location>
        <begin position="206"/>
        <end position="227"/>
    </location>
</feature>
<feature type="helix" evidence="75">
    <location>
        <begin position="230"/>
        <end position="251"/>
    </location>
</feature>
<feature type="helix" evidence="75">
    <location>
        <begin position="254"/>
        <end position="256"/>
    </location>
</feature>
<feature type="helix" evidence="75">
    <location>
        <begin position="257"/>
        <end position="268"/>
    </location>
</feature>
<feature type="helix" evidence="75">
    <location>
        <begin position="270"/>
        <end position="272"/>
    </location>
</feature>
<feature type="helix" evidence="75">
    <location>
        <begin position="273"/>
        <end position="277"/>
    </location>
</feature>
<feature type="turn" evidence="75">
    <location>
        <begin position="280"/>
        <end position="282"/>
    </location>
</feature>
<feature type="helix" evidence="75">
    <location>
        <begin position="284"/>
        <end position="290"/>
    </location>
</feature>
<feature type="helix" evidence="75">
    <location>
        <begin position="293"/>
        <end position="303"/>
    </location>
</feature>
<feature type="helix" evidence="75">
    <location>
        <begin position="309"/>
        <end position="327"/>
    </location>
</feature>
<feature type="helix" evidence="75">
    <location>
        <begin position="345"/>
        <end position="358"/>
    </location>
</feature>
<feature type="helix" evidence="75">
    <location>
        <begin position="364"/>
        <end position="380"/>
    </location>
</feature>
<proteinExistence type="evidence at protein level"/>
<organism>
    <name type="scientific">Homo sapiens</name>
    <name type="common">Human</name>
    <dbReference type="NCBI Taxonomy" id="9606"/>
    <lineage>
        <taxon>Eukaryota</taxon>
        <taxon>Metazoa</taxon>
        <taxon>Chordata</taxon>
        <taxon>Craniata</taxon>
        <taxon>Vertebrata</taxon>
        <taxon>Euteleostomi</taxon>
        <taxon>Mammalia</taxon>
        <taxon>Eutheria</taxon>
        <taxon>Euarchontoglires</taxon>
        <taxon>Primates</taxon>
        <taxon>Haplorrhini</taxon>
        <taxon>Catarrhini</taxon>
        <taxon>Hominidae</taxon>
        <taxon>Homo</taxon>
    </lineage>
</organism>